<evidence type="ECO:0000255" key="1">
    <source>
        <dbReference type="PROSITE-ProRule" id="PRU00380"/>
    </source>
</evidence>
<evidence type="ECO:0000255" key="2">
    <source>
        <dbReference type="PROSITE-ProRule" id="PRU00981"/>
    </source>
</evidence>
<evidence type="ECO:0000256" key="3">
    <source>
        <dbReference type="SAM" id="MobiDB-lite"/>
    </source>
</evidence>
<evidence type="ECO:0000269" key="4">
    <source>
    </source>
</evidence>
<evidence type="ECO:0000269" key="5">
    <source>
    </source>
</evidence>
<evidence type="ECO:0000269" key="6">
    <source>
    </source>
</evidence>
<evidence type="ECO:0000269" key="7">
    <source>
    </source>
</evidence>
<evidence type="ECO:0000305" key="8"/>
<evidence type="ECO:0000312" key="9">
    <source>
        <dbReference type="FlyBase" id="FBgn0002631"/>
    </source>
</evidence>
<gene>
    <name evidence="9" type="primary">E(spl)m5-HLH</name>
    <name type="synonym">HLHm5</name>
    <name evidence="9" type="ORF">CG6096</name>
</gene>
<keyword id="KW-0217">Developmental protein</keyword>
<keyword id="KW-0221">Differentiation</keyword>
<keyword id="KW-0238">DNA-binding</keyword>
<keyword id="KW-0524">Neurogenesis</keyword>
<keyword id="KW-0539">Nucleus</keyword>
<keyword id="KW-1185">Reference proteome</keyword>
<keyword id="KW-0678">Repressor</keyword>
<keyword id="KW-0804">Transcription</keyword>
<keyword id="KW-0805">Transcription regulation</keyword>
<accession>P13096</accession>
<accession>Q56K28</accession>
<accession>Q56K51</accession>
<accession>Q56K70</accession>
<accession>Q56K88</accession>
<accession>Q56K96</accession>
<accession>Q56KF0</accession>
<accession>Q56KF1</accession>
<accession>Q56KG3</accession>
<accession>Q56KH0</accession>
<accession>Q56KI0</accession>
<accession>Q56KJ4</accession>
<accession>Q56KK0</accession>
<accession>Q56KQ1</accession>
<accession>Q56KQ5</accession>
<accession>Q56KS5</accession>
<accession>Q56KV2</accession>
<accession>Q56KV5</accession>
<accession>Q56KV7</accession>
<accession>Q56KW6</accession>
<accession>Q56KX1</accession>
<accession>Q56KZ8</accession>
<accession>Q5S489</accession>
<accession>Q5S4I5</accession>
<accession>Q5S4J7</accession>
<accession>Q9VBI8</accession>
<proteinExistence type="evidence at protein level"/>
<sequence length="178" mass="19923">MAPQSNNSTTFVSKTQHYLKVKKPLLERQRRARMNKCLDTLKTLVAEFQGDDAILRMDKAEMLEAALVFMRKQVVKQQAPVSPLPMDSFKNGYMNAVSEISRVMACTPAMSVDVGKTVMTHLGVEFQRMLQADQVQTSVTTSTPRPLSPASSGYHSDNEDSQSAASPKPVEETMWRPW</sequence>
<comment type="function">
    <text evidence="6">Participates in the control of cell fate choice by uncommitted neuroectodermal cells in the embryo. Transcriptional repressor. Binds DNA on N-box motifs: 5'-CACNAG-3'.</text>
</comment>
<comment type="subunit">
    <text>Transcription repression requires formation of a complex with a corepressor protein (Groucho). Forms homodimers.</text>
</comment>
<comment type="interaction">
    <interactant intactId="EBI-104760">
        <id>P13096</id>
    </interactant>
    <interactant intactId="EBI-153866">
        <id>P16371</id>
        <label>gro</label>
    </interactant>
    <organismsDiffer>false</organismsDiffer>
    <experiments>3</experiments>
</comment>
<comment type="subcellular location">
    <subcellularLocation>
        <location evidence="8">Nucleus</location>
    </subcellularLocation>
</comment>
<comment type="developmental stage">
    <text evidence="6">Expressed at the time when separation of neural and epidermal precursors cells occurs. Mesectodermal expression appears shortly before the onset of gastrulation.</text>
</comment>
<comment type="domain">
    <text evidence="7">The orange domain and the basic helix-loop-helix motif mediate repression of specific transcriptional activators, such as basic helix-loop-helix protein dimers.</text>
</comment>
<comment type="domain">
    <text evidence="7">The C-terminal WRPW motif is a transcriptional repression domain necessary for the interaction with Groucho, a transcriptional corepressor recruited to specific target DNA by Hairy-related proteins.</text>
</comment>
<organism>
    <name type="scientific">Drosophila melanogaster</name>
    <name type="common">Fruit fly</name>
    <dbReference type="NCBI Taxonomy" id="7227"/>
    <lineage>
        <taxon>Eukaryota</taxon>
        <taxon>Metazoa</taxon>
        <taxon>Ecdysozoa</taxon>
        <taxon>Arthropoda</taxon>
        <taxon>Hexapoda</taxon>
        <taxon>Insecta</taxon>
        <taxon>Pterygota</taxon>
        <taxon>Neoptera</taxon>
        <taxon>Endopterygota</taxon>
        <taxon>Diptera</taxon>
        <taxon>Brachycera</taxon>
        <taxon>Muscomorpha</taxon>
        <taxon>Ephydroidea</taxon>
        <taxon>Drosophilidae</taxon>
        <taxon>Drosophila</taxon>
        <taxon>Sophophora</taxon>
    </lineage>
</organism>
<feature type="chain" id="PRO_0000127172" description="Enhancer of split m5 protein">
    <location>
        <begin position="1"/>
        <end position="178"/>
    </location>
</feature>
<feature type="domain" description="bHLH" evidence="2">
    <location>
        <begin position="18"/>
        <end position="73"/>
    </location>
</feature>
<feature type="domain" description="Orange" evidence="1">
    <location>
        <begin position="89"/>
        <end position="122"/>
    </location>
</feature>
<feature type="region of interest" description="Disordered" evidence="3">
    <location>
        <begin position="135"/>
        <end position="178"/>
    </location>
</feature>
<feature type="short sequence motif" description="WRPW motif">
    <location>
        <begin position="175"/>
        <end position="178"/>
    </location>
</feature>
<feature type="compositionally biased region" description="Polar residues" evidence="3">
    <location>
        <begin position="135"/>
        <end position="165"/>
    </location>
</feature>
<feature type="compositionally biased region" description="Basic and acidic residues" evidence="3">
    <location>
        <begin position="169"/>
        <end position="178"/>
    </location>
</feature>
<feature type="sequence variant" description="In strain: Nv2001_f0696, NVIII-46 and NVIII-24." evidence="4 5">
    <original>A</original>
    <variation>V</variation>
    <location>
        <position position="2"/>
    </location>
</feature>
<feature type="sequence variant" description="In strain: NVIII-46 and NVIII-24." evidence="4">
    <original>P</original>
    <variation>Q</variation>
    <location>
        <position position="169"/>
    </location>
</feature>
<protein>
    <recommendedName>
        <fullName>Enhancer of split m5 protein</fullName>
        <shortName>E(spl)m5</shortName>
    </recommendedName>
</protein>
<reference key="1">
    <citation type="journal article" date="1989" name="EMBO J.">
        <title>Closely related transcripts encoded by the neurogenic gene complex enhancer of split of Drosophila melanogaster.</title>
        <authorList>
            <person name="Klaembt C."/>
            <person name="Knust E."/>
            <person name="Tietze K."/>
            <person name="Campos-Ortega J.A."/>
        </authorList>
    </citation>
    <scope>NUCLEOTIDE SEQUENCE [GENOMIC DNA]</scope>
    <scope>FUNCTION</scope>
    <scope>DEVELOPMENTAL STAGE</scope>
</reference>
<reference key="2">
    <citation type="journal article" date="2005" name="Mol. Biol. Evol.">
        <title>Identifying signatures of selection at the enhancer of split neurogenic gene complex in Drosophila.</title>
        <authorList>
            <person name="Macdonald S.J."/>
            <person name="Long A.D."/>
        </authorList>
    </citation>
    <scope>NUCLEOTIDE SEQUENCE [GENOMIC DNA]</scope>
    <scope>VARIANTS VAL-2 AND GLN-169</scope>
    <source>
        <strain>NVIII-1</strain>
        <strain>NVIII-18</strain>
        <strain>NVIII-2</strain>
        <strain>NVIII-22</strain>
        <strain>NVIII-24</strain>
        <strain>NVIII-28</strain>
        <strain>NVIII-41</strain>
        <strain>NVIII-42</strain>
        <strain>NVIII-46</strain>
        <strain>NVIII-5</strain>
        <strain>NVIII-9</strain>
        <strain>NVIII-m11</strain>
        <strain>NVIII-m12</strain>
        <strain>NVIII-m13</strain>
        <strain>NVIII-m15</strain>
        <strain>NVIII-m19</strain>
    </source>
</reference>
<reference key="3">
    <citation type="journal article" date="2000" name="Science">
        <title>The genome sequence of Drosophila melanogaster.</title>
        <authorList>
            <person name="Adams M.D."/>
            <person name="Celniker S.E."/>
            <person name="Holt R.A."/>
            <person name="Evans C.A."/>
            <person name="Gocayne J.D."/>
            <person name="Amanatides P.G."/>
            <person name="Scherer S.E."/>
            <person name="Li P.W."/>
            <person name="Hoskins R.A."/>
            <person name="Galle R.F."/>
            <person name="George R.A."/>
            <person name="Lewis S.E."/>
            <person name="Richards S."/>
            <person name="Ashburner M."/>
            <person name="Henderson S.N."/>
            <person name="Sutton G.G."/>
            <person name="Wortman J.R."/>
            <person name="Yandell M.D."/>
            <person name="Zhang Q."/>
            <person name="Chen L.X."/>
            <person name="Brandon R.C."/>
            <person name="Rogers Y.-H.C."/>
            <person name="Blazej R.G."/>
            <person name="Champe M."/>
            <person name="Pfeiffer B.D."/>
            <person name="Wan K.H."/>
            <person name="Doyle C."/>
            <person name="Baxter E.G."/>
            <person name="Helt G."/>
            <person name="Nelson C.R."/>
            <person name="Miklos G.L.G."/>
            <person name="Abril J.F."/>
            <person name="Agbayani A."/>
            <person name="An H.-J."/>
            <person name="Andrews-Pfannkoch C."/>
            <person name="Baldwin D."/>
            <person name="Ballew R.M."/>
            <person name="Basu A."/>
            <person name="Baxendale J."/>
            <person name="Bayraktaroglu L."/>
            <person name="Beasley E.M."/>
            <person name="Beeson K.Y."/>
            <person name="Benos P.V."/>
            <person name="Berman B.P."/>
            <person name="Bhandari D."/>
            <person name="Bolshakov S."/>
            <person name="Borkova D."/>
            <person name="Botchan M.R."/>
            <person name="Bouck J."/>
            <person name="Brokstein P."/>
            <person name="Brottier P."/>
            <person name="Burtis K.C."/>
            <person name="Busam D.A."/>
            <person name="Butler H."/>
            <person name="Cadieu E."/>
            <person name="Center A."/>
            <person name="Chandra I."/>
            <person name="Cherry J.M."/>
            <person name="Cawley S."/>
            <person name="Dahlke C."/>
            <person name="Davenport L.B."/>
            <person name="Davies P."/>
            <person name="de Pablos B."/>
            <person name="Delcher A."/>
            <person name="Deng Z."/>
            <person name="Mays A.D."/>
            <person name="Dew I."/>
            <person name="Dietz S.M."/>
            <person name="Dodson K."/>
            <person name="Doup L.E."/>
            <person name="Downes M."/>
            <person name="Dugan-Rocha S."/>
            <person name="Dunkov B.C."/>
            <person name="Dunn P."/>
            <person name="Durbin K.J."/>
            <person name="Evangelista C.C."/>
            <person name="Ferraz C."/>
            <person name="Ferriera S."/>
            <person name="Fleischmann W."/>
            <person name="Fosler C."/>
            <person name="Gabrielian A.E."/>
            <person name="Garg N.S."/>
            <person name="Gelbart W.M."/>
            <person name="Glasser K."/>
            <person name="Glodek A."/>
            <person name="Gong F."/>
            <person name="Gorrell J.H."/>
            <person name="Gu Z."/>
            <person name="Guan P."/>
            <person name="Harris M."/>
            <person name="Harris N.L."/>
            <person name="Harvey D.A."/>
            <person name="Heiman T.J."/>
            <person name="Hernandez J.R."/>
            <person name="Houck J."/>
            <person name="Hostin D."/>
            <person name="Houston K.A."/>
            <person name="Howland T.J."/>
            <person name="Wei M.-H."/>
            <person name="Ibegwam C."/>
            <person name="Jalali M."/>
            <person name="Kalush F."/>
            <person name="Karpen G.H."/>
            <person name="Ke Z."/>
            <person name="Kennison J.A."/>
            <person name="Ketchum K.A."/>
            <person name="Kimmel B.E."/>
            <person name="Kodira C.D."/>
            <person name="Kraft C.L."/>
            <person name="Kravitz S."/>
            <person name="Kulp D."/>
            <person name="Lai Z."/>
            <person name="Lasko P."/>
            <person name="Lei Y."/>
            <person name="Levitsky A.A."/>
            <person name="Li J.H."/>
            <person name="Li Z."/>
            <person name="Liang Y."/>
            <person name="Lin X."/>
            <person name="Liu X."/>
            <person name="Mattei B."/>
            <person name="McIntosh T.C."/>
            <person name="McLeod M.P."/>
            <person name="McPherson D."/>
            <person name="Merkulov G."/>
            <person name="Milshina N.V."/>
            <person name="Mobarry C."/>
            <person name="Morris J."/>
            <person name="Moshrefi A."/>
            <person name="Mount S.M."/>
            <person name="Moy M."/>
            <person name="Murphy B."/>
            <person name="Murphy L."/>
            <person name="Muzny D.M."/>
            <person name="Nelson D.L."/>
            <person name="Nelson D.R."/>
            <person name="Nelson K.A."/>
            <person name="Nixon K."/>
            <person name="Nusskern D.R."/>
            <person name="Pacleb J.M."/>
            <person name="Palazzolo M."/>
            <person name="Pittman G.S."/>
            <person name="Pan S."/>
            <person name="Pollard J."/>
            <person name="Puri V."/>
            <person name="Reese M.G."/>
            <person name="Reinert K."/>
            <person name="Remington K."/>
            <person name="Saunders R.D.C."/>
            <person name="Scheeler F."/>
            <person name="Shen H."/>
            <person name="Shue B.C."/>
            <person name="Siden-Kiamos I."/>
            <person name="Simpson M."/>
            <person name="Skupski M.P."/>
            <person name="Smith T.J."/>
            <person name="Spier E."/>
            <person name="Spradling A.C."/>
            <person name="Stapleton M."/>
            <person name="Strong R."/>
            <person name="Sun E."/>
            <person name="Svirskas R."/>
            <person name="Tector C."/>
            <person name="Turner R."/>
            <person name="Venter E."/>
            <person name="Wang A.H."/>
            <person name="Wang X."/>
            <person name="Wang Z.-Y."/>
            <person name="Wassarman D.A."/>
            <person name="Weinstock G.M."/>
            <person name="Weissenbach J."/>
            <person name="Williams S.M."/>
            <person name="Woodage T."/>
            <person name="Worley K.C."/>
            <person name="Wu D."/>
            <person name="Yang S."/>
            <person name="Yao Q.A."/>
            <person name="Ye J."/>
            <person name="Yeh R.-F."/>
            <person name="Zaveri J.S."/>
            <person name="Zhan M."/>
            <person name="Zhang G."/>
            <person name="Zhao Q."/>
            <person name="Zheng L."/>
            <person name="Zheng X.H."/>
            <person name="Zhong F.N."/>
            <person name="Zhong W."/>
            <person name="Zhou X."/>
            <person name="Zhu S.C."/>
            <person name="Zhu X."/>
            <person name="Smith H.O."/>
            <person name="Gibbs R.A."/>
            <person name="Myers E.W."/>
            <person name="Rubin G.M."/>
            <person name="Venter J.C."/>
        </authorList>
    </citation>
    <scope>NUCLEOTIDE SEQUENCE [LARGE SCALE GENOMIC DNA]</scope>
    <source>
        <strain>Berkeley</strain>
    </source>
</reference>
<reference key="4">
    <citation type="journal article" date="2002" name="Genome Biol.">
        <title>Annotation of the Drosophila melanogaster euchromatic genome: a systematic review.</title>
        <authorList>
            <person name="Misra S."/>
            <person name="Crosby M.A."/>
            <person name="Mungall C.J."/>
            <person name="Matthews B.B."/>
            <person name="Campbell K.S."/>
            <person name="Hradecky P."/>
            <person name="Huang Y."/>
            <person name="Kaminker J.S."/>
            <person name="Millburn G.H."/>
            <person name="Prochnik S.E."/>
            <person name="Smith C.D."/>
            <person name="Tupy J.L."/>
            <person name="Whitfield E.J."/>
            <person name="Bayraktaroglu L."/>
            <person name="Berman B.P."/>
            <person name="Bettencourt B.R."/>
            <person name="Celniker S.E."/>
            <person name="de Grey A.D.N.J."/>
            <person name="Drysdale R.A."/>
            <person name="Harris N.L."/>
            <person name="Richter J."/>
            <person name="Russo S."/>
            <person name="Schroeder A.J."/>
            <person name="Shu S.Q."/>
            <person name="Stapleton M."/>
            <person name="Yamada C."/>
            <person name="Ashburner M."/>
            <person name="Gelbart W.M."/>
            <person name="Rubin G.M."/>
            <person name="Lewis S.E."/>
        </authorList>
    </citation>
    <scope>GENOME REANNOTATION</scope>
    <source>
        <strain>Berkeley</strain>
    </source>
</reference>
<reference key="5">
    <citation type="journal article" date="2002" name="Genome Biol.">
        <title>A Drosophila full-length cDNA resource.</title>
        <authorList>
            <person name="Stapleton M."/>
            <person name="Carlson J.W."/>
            <person name="Brokstein P."/>
            <person name="Yu C."/>
            <person name="Champe M."/>
            <person name="George R.A."/>
            <person name="Guarin H."/>
            <person name="Kronmiller B."/>
            <person name="Pacleb J.M."/>
            <person name="Park S."/>
            <person name="Wan K.H."/>
            <person name="Rubin G.M."/>
            <person name="Celniker S.E."/>
        </authorList>
    </citation>
    <scope>NUCLEOTIDE SEQUENCE [LARGE SCALE MRNA]</scope>
    <source>
        <strain>Berkeley</strain>
        <tissue>Embryo</tissue>
    </source>
</reference>
<reference key="6">
    <citation type="journal article" date="2005" name="Genome Biol.">
        <title>A low-cost open-source SNP genotyping platform for association mapping applications.</title>
        <authorList>
            <person name="Macdonald S.J."/>
            <person name="Pastinen T."/>
            <person name="Genissel A."/>
            <person name="Cornforth T.W."/>
            <person name="Long A.D."/>
        </authorList>
    </citation>
    <scope>NUCLEOTIDE SEQUENCE [GENOMIC DNA] OF 2-130</scope>
    <scope>VARIANT VAL-2</scope>
    <source>
        <strain>Nv2001_f0501</strain>
        <strain>Nv2001_f0502</strain>
        <strain>Nv2001_f0503</strain>
        <strain>Nv2001_f0505</strain>
        <strain>Nv2001_f0506</strain>
        <strain>Nv2001_f0507</strain>
        <strain>Nv2001_f0508</strain>
        <strain>Nv2001_f0509</strain>
        <strain>Nv2001_f0513</strain>
        <strain>Nv2001_f0514</strain>
        <strain>Nv2001_f0515</strain>
        <strain>Nv2001_f0516</strain>
        <strain>Nv2001_f0517</strain>
        <strain>Nv2001_f0518</strain>
        <strain>Nv2001_f0519</strain>
        <strain>Nv2001_f0520</strain>
        <strain>Nv2001_f0521</strain>
        <strain>Nv2001_f0522</strain>
        <strain>Nv2001_f0523</strain>
        <strain>Nv2001_f0524</strain>
        <strain>Nv2001_f0525</strain>
        <strain>Nv2001_f0526</strain>
        <strain>Nv2001_f0527</strain>
        <strain>Nv2001_f0529</strain>
        <strain>Nv2001_f0530</strain>
        <strain>Nv2001_f0531</strain>
        <strain>Nv2001_f0532</strain>
        <strain>Nv2001_f0533</strain>
        <strain>Nv2001_f0534</strain>
        <strain>Nv2001_f0535</strain>
        <strain>Nv2001_f0536</strain>
        <strain>Nv2001_f0537</strain>
        <strain>Nv2001_f0538</strain>
        <strain>Nv2001_f0539</strain>
        <strain>Nv2001_f0540</strain>
        <strain>Nv2001_f0541</strain>
        <strain>Nv2001_f0543</strain>
        <strain>Nv2001_f0544</strain>
        <strain>Nv2001_f0545</strain>
        <strain>Nv2001_f0546</strain>
        <strain>Nv2001_f0547</strain>
        <strain>Nv2001_f0548</strain>
        <strain>Nv2001_f0549</strain>
        <strain>Nv2001_f0550</strain>
        <strain>Nv2001_f0551</strain>
        <strain>Nv2001_f0552</strain>
        <strain>Nv2001_f0553</strain>
        <strain>Nv2001_f0554</strain>
        <strain>Nv2001_f0555</strain>
        <strain>Nv2001_f0556</strain>
        <strain>Nv2001_f0557</strain>
        <strain>Nv2001_f0558</strain>
        <strain>Nv2001_f0559</strain>
        <strain>Nv2001_f0560</strain>
        <strain>Nv2001_f0561</strain>
        <strain>Nv2001_f0562</strain>
        <strain>Nv2001_f0563</strain>
        <strain>Nv2001_f0564</strain>
        <strain>Nv2001_f0565</strain>
        <strain>Nv2001_f0566</strain>
        <strain>Nv2001_f0567</strain>
        <strain>Nv2001_f0568</strain>
        <strain>Nv2001_f0569</strain>
        <strain>Nv2001_f0570</strain>
        <strain>Nv2001_f0571</strain>
        <strain>Nv2001_f0572</strain>
        <strain>Nv2001_f0573</strain>
        <strain>Nv2001_f0574</strain>
        <strain>Nv2001_f0575</strain>
        <strain>Nv2001_f0576</strain>
        <strain>Nv2001_f0577</strain>
        <strain>Nv2001_f0578</strain>
        <strain>Nv2001_f0579</strain>
        <strain>Nv2001_f0580</strain>
        <strain>Nv2001_f0581</strain>
        <strain>Nv2001_f0582</strain>
        <strain>Nv2001_f0583</strain>
        <strain>Nv2001_f0584</strain>
        <strain>Nv2001_f0585</strain>
        <strain>Nv2001_f0586</strain>
        <strain>Nv2001_f0587</strain>
        <strain>Nv2001_f0588</strain>
        <strain>Nv2001_f0589</strain>
        <strain>Nv2001_f0590</strain>
        <strain>Nv2001_f0591</strain>
        <strain>Nv2001_f0592</strain>
        <strain>Nv2001_f0593</strain>
        <strain>Nv2001_f0594</strain>
        <strain>Nv2001_f0596</strain>
        <strain>Nv2001_f0597</strain>
        <strain>Nv2001_f0598</strain>
        <strain>Nv2001_f0600</strain>
        <strain>Nv2001_f0601</strain>
        <strain>Nv2001_f0603</strain>
        <strain>Nv2001_f0604</strain>
        <strain>Nv2001_f0605</strain>
        <strain>Nv2001_f0606</strain>
        <strain>Nv2001_f0607</strain>
        <strain>Nv2001_f0608</strain>
        <strain>Nv2001_f0609</strain>
        <strain>Nv2001_f0610</strain>
        <strain>Nv2001_f0611</strain>
        <strain>Nv2001_f0612</strain>
        <strain>Nv2001_f0613</strain>
        <strain>Nv2001_f0614</strain>
        <strain>Nv2001_f0615</strain>
        <strain>Nv2001_f0616</strain>
        <strain>Nv2001_f0617</strain>
        <strain>Nv2001_f0618</strain>
        <strain>Nv2001_f0619</strain>
        <strain>Nv2001_f0620</strain>
        <strain>Nv2001_f0621</strain>
        <strain>Nv2001_f0622</strain>
        <strain>Nv2001_f0623</strain>
        <strain>Nv2001_f0625</strain>
        <strain>Nv2001_f0626</strain>
        <strain>Nv2001_f0627</strain>
        <strain>Nv2001_f0628</strain>
        <strain>Nv2001_f0629</strain>
        <strain>Nv2001_f0630</strain>
        <strain>Nv2001_f0631</strain>
        <strain>Nv2001_f0632</strain>
        <strain>Nv2001_f0633</strain>
        <strain>Nv2001_f0634</strain>
        <strain>Nv2001_f0635</strain>
        <strain>Nv2001_f0636</strain>
        <strain>Nv2001_f0637</strain>
        <strain>Nv2001_f0638</strain>
        <strain>Nv2001_f0639</strain>
        <strain>Nv2001_f0640</strain>
        <strain>Nv2001_f0641</strain>
        <strain>Nv2001_f0642</strain>
        <strain>Nv2001_f0643</strain>
        <strain>Nv2001_f0644</strain>
        <strain>Nv2001_f0645</strain>
        <strain>Nv2001_f0646</strain>
        <strain>Nv2001_f0647</strain>
        <strain>Nv2001_f0648</strain>
        <strain>Nv2001_f0649</strain>
        <strain>Nv2001_f0650</strain>
        <strain>Nv2001_f0651</strain>
        <strain>Nv2001_f0652</strain>
        <strain>Nv2001_f0653</strain>
        <strain>Nv2001_f0654</strain>
        <strain>Nv2001_f0655</strain>
        <strain>Nv2001_f0656</strain>
        <strain>Nv2001_f0658</strain>
        <strain>Nv2001_f0659</strain>
        <strain>Nv2001_f0660</strain>
        <strain>Nv2001_f0661</strain>
        <strain>Nv2001_f0662</strain>
        <strain>Nv2001_f0663</strain>
        <strain>Nv2001_f0664</strain>
        <strain>Nv2001_f0665</strain>
        <strain>Nv2001_f0666</strain>
        <strain>Nv2001_f0668</strain>
        <strain>Nv2001_f0669</strain>
        <strain>Nv2001_f0670</strain>
        <strain>Nv2001_f0671</strain>
        <strain>Nv2001_f0672</strain>
        <strain>Nv2001_f0673</strain>
        <strain>Nv2001_f0674</strain>
        <strain>Nv2001_f0675</strain>
        <strain>Nv2001_f0676</strain>
        <strain>Nv2001_f0677</strain>
        <strain>Nv2001_f0678</strain>
        <strain>Nv2001_f0679</strain>
        <strain>Nv2001_f0680</strain>
        <strain>Nv2001_f0682</strain>
        <strain>Nv2001_f0683</strain>
        <strain>Nv2001_f0684</strain>
        <strain>Nv2001_f0685</strain>
        <strain>Nv2001_f0686</strain>
        <strain>Nv2001_f0687</strain>
        <strain>Nv2001_f0688</strain>
        <strain>Nv2001_f0689</strain>
        <strain>Nv2001_f0692</strain>
        <strain>Nv2001_f0693</strain>
        <strain>Nv2001_f0694</strain>
        <strain>Nv2001_f0695</strain>
        <strain>Nv2001_f0696</strain>
        <strain>Nv2001_f0698</strain>
        <strain>Nv2001_f0699</strain>
        <strain>Nv2001_f0700</strain>
        <strain>Nv2001_f0701</strain>
        <strain>Nv2001_f0702</strain>
        <strain>Nv2001_f0703</strain>
        <strain>Nv2001_f0704</strain>
        <strain>Nv2001_f0705</strain>
        <strain>Nv2001_f0706</strain>
        <strain>Nv2001_f0707</strain>
        <strain>Nv2001_f0708</strain>
        <strain>Nv2001_f0710</strain>
        <strain>Nv2001_f0712</strain>
        <strain>Nv2001_f0713</strain>
        <strain>Nv2001_f0714</strain>
        <strain>Nv2001_f0715</strain>
        <strain>Nv2001_f0716</strain>
        <strain>Nv2001_f0717</strain>
        <strain>Nv2001_f0718</strain>
        <strain>Nv2001_f0719</strain>
        <strain>Nv2001_f0720</strain>
        <strain>Nv2001_f0721</strain>
        <strain>Nv2001_f0723</strain>
        <strain>Nv2001_f0724</strain>
        <strain>Nv2001_f0726</strain>
        <strain>Nv2001_f0727</strain>
        <strain>Nv2001_f0729</strain>
        <strain>Nv2001_f0730</strain>
        <strain>Nv2001_f0732</strain>
        <strain>Nv2001_f0733</strain>
        <strain>Nv2001_f0734</strain>
        <strain>Nv2001_f0735</strain>
        <strain>Nv2001_f0736</strain>
        <strain>Nv2001_f0737</strain>
        <strain>Nv2001_f0738</strain>
        <strain>Nv2001_f0739</strain>
        <strain>Nv2001_f0741</strain>
        <strain>Nv2001_f0742</strain>
        <strain>Nv2001_f0743</strain>
        <strain>Nv2001_f0744</strain>
        <strain>Nv2001_f0745</strain>
        <strain>Nv2001_f0746</strain>
        <strain>Nv2001_f0747</strain>
        <strain>Nv2001_f0748</strain>
        <strain>Nv2001_f0749</strain>
        <strain>Nv2001_f0750</strain>
        <strain>Nv2001_f0752</strain>
        <strain>Nv2001_f0753</strain>
        <strain>Nv2001_f0754</strain>
        <strain>Nv2001_f0755</strain>
        <strain>Nv2001_f0756</strain>
        <strain>Nv2001_f0757</strain>
        <strain>Nv2001_f0758</strain>
        <strain>Nv2001_f0759</strain>
        <strain>Nv2001_f0760</strain>
        <strain>Nv2001_f0762</strain>
        <strain>Nv2001_f0763</strain>
        <strain>Nv2001_f0764</strain>
        <strain>Nv2001_f0765</strain>
        <strain>Nv2001_f0766</strain>
        <strain>Nv2001_f0767</strain>
        <strain>Nv2001_f0769</strain>
        <strain>Nv2001_f0770</strain>
        <strain>Nv2001_f0771</strain>
        <strain>Nv2001_f0772</strain>
        <strain>Nv2001_f0773</strain>
        <strain>Nv2001_f0775</strain>
        <strain>Nv2001_f0776</strain>
        <strain>Nv2001_f0777</strain>
        <strain>Nv2001_f0780</strain>
        <strain>Nv2001_f0781</strain>
        <strain>Nv2001_f0782</strain>
        <strain>Nv2001_f0783</strain>
        <strain>Nv2001_f0784</strain>
        <strain>Nv2001_f0785</strain>
        <strain>Nv2001_f0786</strain>
        <strain>Nv2001_f0787</strain>
        <strain>Nv2001_f0788</strain>
        <strain>Nv2001_f0790</strain>
        <strain>Nv2001_f0791</strain>
        <strain>Nv2001_f0793</strain>
        <strain>Nv2001_f0794</strain>
        <strain>Nv2001_f0795</strain>
        <strain>Nv2001_f0797</strain>
        <strain>Nv2001_f0798</strain>
        <strain>Nv2001_f0799</strain>
        <strain>Nv2001_f0801</strain>
        <strain>Nv2001_f0802</strain>
        <strain>Nv2001_f0803</strain>
        <strain>Nv2001_f0804</strain>
        <strain>Nv2001_f0805</strain>
        <strain>Nv2001_f0806</strain>
        <strain>Nv2001_f0807</strain>
        <strain>Nv2001_f0808</strain>
        <strain>Nv2001_f0809</strain>
        <strain>Nv2001_f0810</strain>
        <strain>Nv2001_f0811</strain>
        <strain>Nv2001_f0812</strain>
        <strain>Nv2001_f0814</strain>
        <strain>Nv2001_f0815</strain>
        <strain>Nv2001_f0818</strain>
        <strain>Nv2001_f0819</strain>
        <strain>Nv2001_f0820</strain>
        <strain>Nv2001_f0822</strain>
        <strain>Nv2001_f0823</strain>
        <strain>Nv2001_f0825</strain>
        <strain>Nv2001_f0826</strain>
        <strain>Nv2001_f0827</strain>
        <strain>Nv2001_f0828</strain>
        <strain>Nv2001_f0830</strain>
        <strain>Nv2001_f0832</strain>
        <strain>Nv2001_f0833</strain>
        <strain>Nv2001_f0834</strain>
        <strain>Nv2001_f0836</strain>
        <strain>Nv2001_f0837</strain>
        <strain>Nv2001_f0838</strain>
        <strain>Nv2001_f0839</strain>
        <strain>Nv2001_f0840</strain>
        <strain>Nv2001_f0841</strain>
        <strain>Nv2001_f0844</strain>
        <strain>Nv2001_f0845</strain>
        <strain>Nv2001_f0846</strain>
        <strain>Nv2001_f0847</strain>
        <strain>Nv2001_f0848</strain>
        <strain>Nv2001_f0849</strain>
        <strain>Nv2001_f0850</strain>
        <strain>Nv2001_f0851</strain>
        <strain>Nv2001_f0852</strain>
        <strain>Nv2001_f0853</strain>
        <strain>Nv2001_f0854</strain>
        <strain>Nv2001_f0855</strain>
        <strain>Nv2001_f0856</strain>
        <strain>Nv2001_f0857</strain>
        <strain>Nv2001_f0858</strain>
        <strain>Nv2001_f0859</strain>
        <strain>Nv2001_f0860</strain>
        <strain>Nv2001_f0861</strain>
        <strain>Nv2001_f0862</strain>
        <strain>Nv2001_f0863</strain>
        <strain>Nv2001_f0865</strain>
        <strain>Nv2001_f0866</strain>
        <strain>Nv2001_f0867</strain>
        <strain>Nv2001_f0868</strain>
        <strain>Nv2001_f0869</strain>
        <strain>Nv2001_f0870</strain>
        <strain>Nv2001_f0871</strain>
        <strain>Nv2001_f0872</strain>
        <strain>Nv2001_f0873</strain>
        <strain>Nv2001_f0874</strain>
        <strain>Nv2001_f1002</strain>
    </source>
</reference>
<reference key="7">
    <citation type="journal article" date="1994" name="Cell">
        <title>Groucho is required for Drosophila neurogenesis, segmentation, and sex determination and interacts directly with hairy-related bHLH proteins.</title>
        <authorList>
            <person name="Paroush Z."/>
            <person name="Finley R.L. Jr."/>
            <person name="Kidd T."/>
            <person name="Wainwright S.M."/>
            <person name="Ingham P.W."/>
            <person name="Brent R."/>
            <person name="Ish-Horowicz D."/>
        </authorList>
    </citation>
    <scope>DOMAIN WRPW MOTIF</scope>
</reference>
<name>ESM5_DROME</name>
<dbReference type="EMBL" id="X16552">
    <property type="protein sequence ID" value="CAA34552.1"/>
    <property type="molecule type" value="Genomic_DNA"/>
</dbReference>
<dbReference type="EMBL" id="AY779906">
    <property type="protein sequence ID" value="AAV59049.1"/>
    <property type="molecule type" value="Genomic_DNA"/>
</dbReference>
<dbReference type="EMBL" id="AY779907">
    <property type="protein sequence ID" value="AAV59061.1"/>
    <property type="molecule type" value="Genomic_DNA"/>
</dbReference>
<dbReference type="EMBL" id="AY779908">
    <property type="protein sequence ID" value="AAV59073.1"/>
    <property type="molecule type" value="Genomic_DNA"/>
</dbReference>
<dbReference type="EMBL" id="AY779909">
    <property type="protein sequence ID" value="AAV59085.1"/>
    <property type="molecule type" value="Genomic_DNA"/>
</dbReference>
<dbReference type="EMBL" id="AY779910">
    <property type="protein sequence ID" value="AAV59097.1"/>
    <property type="molecule type" value="Genomic_DNA"/>
</dbReference>
<dbReference type="EMBL" id="AY779911">
    <property type="protein sequence ID" value="AAV59109.1"/>
    <property type="molecule type" value="Genomic_DNA"/>
</dbReference>
<dbReference type="EMBL" id="AY779912">
    <property type="protein sequence ID" value="AAV59121.1"/>
    <property type="molecule type" value="Genomic_DNA"/>
</dbReference>
<dbReference type="EMBL" id="AY779913">
    <property type="protein sequence ID" value="AAV59133.1"/>
    <property type="molecule type" value="Genomic_DNA"/>
</dbReference>
<dbReference type="EMBL" id="AY779914">
    <property type="protein sequence ID" value="AAV59145.1"/>
    <property type="molecule type" value="Genomic_DNA"/>
</dbReference>
<dbReference type="EMBL" id="AY779915">
    <property type="protein sequence ID" value="AAV59157.1"/>
    <property type="molecule type" value="Genomic_DNA"/>
</dbReference>
<dbReference type="EMBL" id="AY779916">
    <property type="protein sequence ID" value="AAV59169.1"/>
    <property type="molecule type" value="Genomic_DNA"/>
</dbReference>
<dbReference type="EMBL" id="AY779917">
    <property type="protein sequence ID" value="AAV59181.1"/>
    <property type="molecule type" value="Genomic_DNA"/>
</dbReference>
<dbReference type="EMBL" id="AY779918">
    <property type="protein sequence ID" value="AAV59193.1"/>
    <property type="molecule type" value="Genomic_DNA"/>
</dbReference>
<dbReference type="EMBL" id="AY779919">
    <property type="protein sequence ID" value="AAV59205.1"/>
    <property type="molecule type" value="Genomic_DNA"/>
</dbReference>
<dbReference type="EMBL" id="AY779920">
    <property type="protein sequence ID" value="AAV59217.1"/>
    <property type="molecule type" value="Genomic_DNA"/>
</dbReference>
<dbReference type="EMBL" id="AY779921">
    <property type="protein sequence ID" value="AAV59229.1"/>
    <property type="molecule type" value="Genomic_DNA"/>
</dbReference>
<dbReference type="EMBL" id="AE014297">
    <property type="protein sequence ID" value="AAF56552.1"/>
    <property type="molecule type" value="Genomic_DNA"/>
</dbReference>
<dbReference type="EMBL" id="AY070597">
    <property type="protein sequence ID" value="AAL48068.1"/>
    <property type="molecule type" value="mRNA"/>
</dbReference>
<dbReference type="EMBL" id="AY906443">
    <property type="protein sequence ID" value="AAX60789.1"/>
    <property type="molecule type" value="Genomic_DNA"/>
</dbReference>
<dbReference type="EMBL" id="AY906444">
    <property type="protein sequence ID" value="AAX60790.1"/>
    <property type="molecule type" value="Genomic_DNA"/>
</dbReference>
<dbReference type="EMBL" id="AY906445">
    <property type="protein sequence ID" value="AAX60791.1"/>
    <property type="molecule type" value="Genomic_DNA"/>
</dbReference>
<dbReference type="EMBL" id="AY906446">
    <property type="protein sequence ID" value="AAX60792.1"/>
    <property type="molecule type" value="Genomic_DNA"/>
</dbReference>
<dbReference type="EMBL" id="AY906447">
    <property type="protein sequence ID" value="AAX60793.1"/>
    <property type="molecule type" value="Genomic_DNA"/>
</dbReference>
<dbReference type="EMBL" id="AY906448">
    <property type="protein sequence ID" value="AAX60794.1"/>
    <property type="molecule type" value="Genomic_DNA"/>
</dbReference>
<dbReference type="EMBL" id="AY906449">
    <property type="protein sequence ID" value="AAX60795.1"/>
    <property type="molecule type" value="Genomic_DNA"/>
</dbReference>
<dbReference type="EMBL" id="AY906450">
    <property type="protein sequence ID" value="AAX60796.1"/>
    <property type="molecule type" value="Genomic_DNA"/>
</dbReference>
<dbReference type="EMBL" id="AY906451">
    <property type="protein sequence ID" value="AAX60797.1"/>
    <property type="molecule type" value="Genomic_DNA"/>
</dbReference>
<dbReference type="EMBL" id="AY906452">
    <property type="protein sequence ID" value="AAX60798.1"/>
    <property type="molecule type" value="Genomic_DNA"/>
</dbReference>
<dbReference type="EMBL" id="AY906453">
    <property type="protein sequence ID" value="AAX60799.1"/>
    <property type="molecule type" value="Genomic_DNA"/>
</dbReference>
<dbReference type="EMBL" id="AY906454">
    <property type="protein sequence ID" value="AAX60800.1"/>
    <property type="molecule type" value="Genomic_DNA"/>
</dbReference>
<dbReference type="EMBL" id="AY906455">
    <property type="protein sequence ID" value="AAX60801.1"/>
    <property type="molecule type" value="Genomic_DNA"/>
</dbReference>
<dbReference type="EMBL" id="AY906456">
    <property type="protein sequence ID" value="AAX60802.1"/>
    <property type="molecule type" value="Genomic_DNA"/>
</dbReference>
<dbReference type="EMBL" id="AY906457">
    <property type="protein sequence ID" value="AAX60803.1"/>
    <property type="molecule type" value="Genomic_DNA"/>
</dbReference>
<dbReference type="EMBL" id="AY906458">
    <property type="protein sequence ID" value="AAX60804.1"/>
    <property type="molecule type" value="Genomic_DNA"/>
</dbReference>
<dbReference type="EMBL" id="AY906459">
    <property type="protein sequence ID" value="AAX60805.1"/>
    <property type="molecule type" value="Genomic_DNA"/>
</dbReference>
<dbReference type="EMBL" id="AY906460">
    <property type="protein sequence ID" value="AAX60806.1"/>
    <property type="molecule type" value="Genomic_DNA"/>
</dbReference>
<dbReference type="EMBL" id="AY906461">
    <property type="protein sequence ID" value="AAX60807.1"/>
    <property type="molecule type" value="Genomic_DNA"/>
</dbReference>
<dbReference type="EMBL" id="AY906462">
    <property type="protein sequence ID" value="AAX60808.1"/>
    <property type="molecule type" value="Genomic_DNA"/>
</dbReference>
<dbReference type="EMBL" id="AY906463">
    <property type="protein sequence ID" value="AAX60809.1"/>
    <property type="molecule type" value="Genomic_DNA"/>
</dbReference>
<dbReference type="EMBL" id="AY906464">
    <property type="protein sequence ID" value="AAX60810.1"/>
    <property type="molecule type" value="Genomic_DNA"/>
</dbReference>
<dbReference type="EMBL" id="AY906465">
    <property type="protein sequence ID" value="AAX60811.1"/>
    <property type="molecule type" value="Genomic_DNA"/>
</dbReference>
<dbReference type="EMBL" id="AY906466">
    <property type="protein sequence ID" value="AAX60812.1"/>
    <property type="molecule type" value="Genomic_DNA"/>
</dbReference>
<dbReference type="EMBL" id="AY906467">
    <property type="protein sequence ID" value="AAX60813.1"/>
    <property type="molecule type" value="Genomic_DNA"/>
</dbReference>
<dbReference type="EMBL" id="AY906468">
    <property type="protein sequence ID" value="AAX60814.1"/>
    <property type="molecule type" value="Genomic_DNA"/>
</dbReference>
<dbReference type="EMBL" id="AY906469">
    <property type="protein sequence ID" value="AAX60815.1"/>
    <property type="molecule type" value="Genomic_DNA"/>
</dbReference>
<dbReference type="EMBL" id="AY906470">
    <property type="protein sequence ID" value="AAX60816.1"/>
    <property type="molecule type" value="Genomic_DNA"/>
</dbReference>
<dbReference type="EMBL" id="AY906471">
    <property type="protein sequence ID" value="AAX60817.1"/>
    <property type="molecule type" value="Genomic_DNA"/>
</dbReference>
<dbReference type="EMBL" id="AY906472">
    <property type="protein sequence ID" value="AAX60818.1"/>
    <property type="molecule type" value="Genomic_DNA"/>
</dbReference>
<dbReference type="EMBL" id="AY906473">
    <property type="protein sequence ID" value="AAX60819.1"/>
    <property type="molecule type" value="Genomic_DNA"/>
</dbReference>
<dbReference type="EMBL" id="AY906474">
    <property type="protein sequence ID" value="AAX60820.1"/>
    <property type="molecule type" value="Genomic_DNA"/>
</dbReference>
<dbReference type="EMBL" id="AY906475">
    <property type="protein sequence ID" value="AAX60821.1"/>
    <property type="molecule type" value="Genomic_DNA"/>
</dbReference>
<dbReference type="EMBL" id="AY906476">
    <property type="protein sequence ID" value="AAX60822.1"/>
    <property type="molecule type" value="Genomic_DNA"/>
</dbReference>
<dbReference type="EMBL" id="AY906477">
    <property type="protein sequence ID" value="AAX60823.1"/>
    <property type="molecule type" value="Genomic_DNA"/>
</dbReference>
<dbReference type="EMBL" id="AY906478">
    <property type="protein sequence ID" value="AAX60824.1"/>
    <property type="molecule type" value="Genomic_DNA"/>
</dbReference>
<dbReference type="EMBL" id="AY906479">
    <property type="protein sequence ID" value="AAX60825.1"/>
    <property type="molecule type" value="Genomic_DNA"/>
</dbReference>
<dbReference type="EMBL" id="AY906480">
    <property type="protein sequence ID" value="AAX60826.1"/>
    <property type="molecule type" value="Genomic_DNA"/>
</dbReference>
<dbReference type="EMBL" id="AY906481">
    <property type="protein sequence ID" value="AAX60827.1"/>
    <property type="molecule type" value="Genomic_DNA"/>
</dbReference>
<dbReference type="EMBL" id="AY906482">
    <property type="protein sequence ID" value="AAX60828.1"/>
    <property type="molecule type" value="Genomic_DNA"/>
</dbReference>
<dbReference type="EMBL" id="AY906483">
    <property type="protein sequence ID" value="AAX60829.1"/>
    <property type="molecule type" value="Genomic_DNA"/>
</dbReference>
<dbReference type="EMBL" id="AY906484">
    <property type="protein sequence ID" value="AAX60830.1"/>
    <property type="molecule type" value="Genomic_DNA"/>
</dbReference>
<dbReference type="EMBL" id="AY906485">
    <property type="protein sequence ID" value="AAX60831.1"/>
    <property type="molecule type" value="Genomic_DNA"/>
</dbReference>
<dbReference type="EMBL" id="AY906486">
    <property type="protein sequence ID" value="AAX60832.1"/>
    <property type="molecule type" value="Genomic_DNA"/>
</dbReference>
<dbReference type="EMBL" id="AY906487">
    <property type="protein sequence ID" value="AAX60833.1"/>
    <property type="molecule type" value="Genomic_DNA"/>
</dbReference>
<dbReference type="EMBL" id="AY906488">
    <property type="protein sequence ID" value="AAX60834.1"/>
    <property type="molecule type" value="Genomic_DNA"/>
</dbReference>
<dbReference type="EMBL" id="AY906489">
    <property type="protein sequence ID" value="AAX60835.1"/>
    <property type="molecule type" value="Genomic_DNA"/>
</dbReference>
<dbReference type="EMBL" id="AY906490">
    <property type="protein sequence ID" value="AAX60836.1"/>
    <property type="molecule type" value="Genomic_DNA"/>
</dbReference>
<dbReference type="EMBL" id="AY906491">
    <property type="protein sequence ID" value="AAX60837.1"/>
    <property type="molecule type" value="Genomic_DNA"/>
</dbReference>
<dbReference type="EMBL" id="AY906492">
    <property type="protein sequence ID" value="AAX60838.1"/>
    <property type="molecule type" value="Genomic_DNA"/>
</dbReference>
<dbReference type="EMBL" id="AY906493">
    <property type="protein sequence ID" value="AAX60839.1"/>
    <property type="molecule type" value="Genomic_DNA"/>
</dbReference>
<dbReference type="EMBL" id="AY906494">
    <property type="protein sequence ID" value="AAX60840.1"/>
    <property type="molecule type" value="Genomic_DNA"/>
</dbReference>
<dbReference type="EMBL" id="AY906495">
    <property type="protein sequence ID" value="AAX60841.1"/>
    <property type="molecule type" value="Genomic_DNA"/>
</dbReference>
<dbReference type="EMBL" id="AY906496">
    <property type="protein sequence ID" value="AAX60842.1"/>
    <property type="molecule type" value="Genomic_DNA"/>
</dbReference>
<dbReference type="EMBL" id="AY906497">
    <property type="protein sequence ID" value="AAX60843.1"/>
    <property type="molecule type" value="Genomic_DNA"/>
</dbReference>
<dbReference type="EMBL" id="AY906498">
    <property type="protein sequence ID" value="AAX60844.1"/>
    <property type="molecule type" value="Genomic_DNA"/>
</dbReference>
<dbReference type="EMBL" id="AY906499">
    <property type="protein sequence ID" value="AAX60845.1"/>
    <property type="molecule type" value="Genomic_DNA"/>
</dbReference>
<dbReference type="EMBL" id="AY906500">
    <property type="protein sequence ID" value="AAX60846.1"/>
    <property type="molecule type" value="Genomic_DNA"/>
</dbReference>
<dbReference type="EMBL" id="AY906501">
    <property type="protein sequence ID" value="AAX60847.1"/>
    <property type="molecule type" value="Genomic_DNA"/>
</dbReference>
<dbReference type="EMBL" id="AY906502">
    <property type="protein sequence ID" value="AAX60848.1"/>
    <property type="molecule type" value="Genomic_DNA"/>
</dbReference>
<dbReference type="EMBL" id="AY906503">
    <property type="protein sequence ID" value="AAX60849.1"/>
    <property type="molecule type" value="Genomic_DNA"/>
</dbReference>
<dbReference type="EMBL" id="AY906504">
    <property type="protein sequence ID" value="AAX60850.1"/>
    <property type="molecule type" value="Genomic_DNA"/>
</dbReference>
<dbReference type="EMBL" id="AY906505">
    <property type="protein sequence ID" value="AAX60851.1"/>
    <property type="molecule type" value="Genomic_DNA"/>
</dbReference>
<dbReference type="EMBL" id="AY906506">
    <property type="protein sequence ID" value="AAX60852.1"/>
    <property type="molecule type" value="Genomic_DNA"/>
</dbReference>
<dbReference type="EMBL" id="AY906507">
    <property type="protein sequence ID" value="AAX60853.1"/>
    <property type="molecule type" value="Genomic_DNA"/>
</dbReference>
<dbReference type="EMBL" id="AY906508">
    <property type="protein sequence ID" value="AAX60854.1"/>
    <property type="molecule type" value="Genomic_DNA"/>
</dbReference>
<dbReference type="EMBL" id="AY906509">
    <property type="protein sequence ID" value="AAX60855.1"/>
    <property type="molecule type" value="Genomic_DNA"/>
</dbReference>
<dbReference type="EMBL" id="AY906510">
    <property type="protein sequence ID" value="AAX60856.1"/>
    <property type="molecule type" value="Genomic_DNA"/>
</dbReference>
<dbReference type="EMBL" id="AY906511">
    <property type="protein sequence ID" value="AAX60857.1"/>
    <property type="molecule type" value="Genomic_DNA"/>
</dbReference>
<dbReference type="EMBL" id="AY906512">
    <property type="protein sequence ID" value="AAX60858.1"/>
    <property type="molecule type" value="Genomic_DNA"/>
</dbReference>
<dbReference type="EMBL" id="AY906513">
    <property type="protein sequence ID" value="AAX60859.1"/>
    <property type="molecule type" value="Genomic_DNA"/>
</dbReference>
<dbReference type="EMBL" id="AY906514">
    <property type="protein sequence ID" value="AAX60860.1"/>
    <property type="molecule type" value="Genomic_DNA"/>
</dbReference>
<dbReference type="EMBL" id="AY906515">
    <property type="protein sequence ID" value="AAX60861.1"/>
    <property type="molecule type" value="Genomic_DNA"/>
</dbReference>
<dbReference type="EMBL" id="AY906516">
    <property type="protein sequence ID" value="AAX60862.1"/>
    <property type="molecule type" value="Genomic_DNA"/>
</dbReference>
<dbReference type="EMBL" id="AY906517">
    <property type="protein sequence ID" value="AAX60863.1"/>
    <property type="molecule type" value="Genomic_DNA"/>
</dbReference>
<dbReference type="EMBL" id="AY906518">
    <property type="protein sequence ID" value="AAX60864.1"/>
    <property type="molecule type" value="Genomic_DNA"/>
</dbReference>
<dbReference type="EMBL" id="AY906519">
    <property type="protein sequence ID" value="AAX60865.1"/>
    <property type="molecule type" value="Genomic_DNA"/>
</dbReference>
<dbReference type="EMBL" id="AY906520">
    <property type="protein sequence ID" value="AAX60866.1"/>
    <property type="molecule type" value="Genomic_DNA"/>
</dbReference>
<dbReference type="EMBL" id="AY906521">
    <property type="protein sequence ID" value="AAX60867.1"/>
    <property type="molecule type" value="Genomic_DNA"/>
</dbReference>
<dbReference type="EMBL" id="AY906522">
    <property type="protein sequence ID" value="AAX60868.1"/>
    <property type="molecule type" value="Genomic_DNA"/>
</dbReference>
<dbReference type="EMBL" id="AY906523">
    <property type="protein sequence ID" value="AAX60869.1"/>
    <property type="molecule type" value="Genomic_DNA"/>
</dbReference>
<dbReference type="EMBL" id="AY906524">
    <property type="protein sequence ID" value="AAX60870.1"/>
    <property type="molecule type" value="Genomic_DNA"/>
</dbReference>
<dbReference type="EMBL" id="AY906525">
    <property type="protein sequence ID" value="AAX60871.1"/>
    <property type="molecule type" value="Genomic_DNA"/>
</dbReference>
<dbReference type="EMBL" id="AY906526">
    <property type="protein sequence ID" value="AAX60872.1"/>
    <property type="molecule type" value="Genomic_DNA"/>
</dbReference>
<dbReference type="EMBL" id="AY906527">
    <property type="protein sequence ID" value="AAX60873.1"/>
    <property type="molecule type" value="Genomic_DNA"/>
</dbReference>
<dbReference type="EMBL" id="AY906528">
    <property type="protein sequence ID" value="AAX60874.1"/>
    <property type="molecule type" value="Genomic_DNA"/>
</dbReference>
<dbReference type="EMBL" id="AY906529">
    <property type="protein sequence ID" value="AAX60875.1"/>
    <property type="molecule type" value="Genomic_DNA"/>
</dbReference>
<dbReference type="EMBL" id="AY906530">
    <property type="protein sequence ID" value="AAX60876.1"/>
    <property type="molecule type" value="Genomic_DNA"/>
</dbReference>
<dbReference type="EMBL" id="AY906531">
    <property type="protein sequence ID" value="AAX60877.1"/>
    <property type="molecule type" value="Genomic_DNA"/>
</dbReference>
<dbReference type="EMBL" id="AY906532">
    <property type="protein sequence ID" value="AAX60878.1"/>
    <property type="molecule type" value="Genomic_DNA"/>
</dbReference>
<dbReference type="EMBL" id="AY906533">
    <property type="protein sequence ID" value="AAX60879.1"/>
    <property type="molecule type" value="Genomic_DNA"/>
</dbReference>
<dbReference type="EMBL" id="AY906534">
    <property type="protein sequence ID" value="AAX60880.1"/>
    <property type="molecule type" value="Genomic_DNA"/>
</dbReference>
<dbReference type="EMBL" id="AY906535">
    <property type="protein sequence ID" value="AAX60881.1"/>
    <property type="molecule type" value="Genomic_DNA"/>
</dbReference>
<dbReference type="EMBL" id="AY906536">
    <property type="protein sequence ID" value="AAX60882.1"/>
    <property type="molecule type" value="Genomic_DNA"/>
</dbReference>
<dbReference type="EMBL" id="AY906537">
    <property type="protein sequence ID" value="AAX60883.1"/>
    <property type="molecule type" value="Genomic_DNA"/>
</dbReference>
<dbReference type="EMBL" id="AY906538">
    <property type="protein sequence ID" value="AAX60884.1"/>
    <property type="molecule type" value="Genomic_DNA"/>
</dbReference>
<dbReference type="EMBL" id="AY906539">
    <property type="protein sequence ID" value="AAX60885.1"/>
    <property type="molecule type" value="Genomic_DNA"/>
</dbReference>
<dbReference type="EMBL" id="AY906540">
    <property type="protein sequence ID" value="AAX60886.1"/>
    <property type="molecule type" value="Genomic_DNA"/>
</dbReference>
<dbReference type="EMBL" id="AY906541">
    <property type="protein sequence ID" value="AAX60887.1"/>
    <property type="molecule type" value="Genomic_DNA"/>
</dbReference>
<dbReference type="EMBL" id="AY906542">
    <property type="protein sequence ID" value="AAX60888.1"/>
    <property type="molecule type" value="Genomic_DNA"/>
</dbReference>
<dbReference type="EMBL" id="AY906543">
    <property type="protein sequence ID" value="AAX60889.1"/>
    <property type="molecule type" value="Genomic_DNA"/>
</dbReference>
<dbReference type="EMBL" id="AY906544">
    <property type="protein sequence ID" value="AAX60890.1"/>
    <property type="molecule type" value="Genomic_DNA"/>
</dbReference>
<dbReference type="EMBL" id="AY906545">
    <property type="protein sequence ID" value="AAX60891.1"/>
    <property type="molecule type" value="Genomic_DNA"/>
</dbReference>
<dbReference type="EMBL" id="AY906546">
    <property type="protein sequence ID" value="AAX60892.1"/>
    <property type="molecule type" value="Genomic_DNA"/>
</dbReference>
<dbReference type="EMBL" id="AY906547">
    <property type="protein sequence ID" value="AAX60893.1"/>
    <property type="molecule type" value="Genomic_DNA"/>
</dbReference>
<dbReference type="EMBL" id="AY906548">
    <property type="protein sequence ID" value="AAX60894.1"/>
    <property type="molecule type" value="Genomic_DNA"/>
</dbReference>
<dbReference type="EMBL" id="AY906549">
    <property type="protein sequence ID" value="AAX60895.1"/>
    <property type="molecule type" value="Genomic_DNA"/>
</dbReference>
<dbReference type="EMBL" id="AY906550">
    <property type="protein sequence ID" value="AAX60896.1"/>
    <property type="molecule type" value="Genomic_DNA"/>
</dbReference>
<dbReference type="EMBL" id="AY906551">
    <property type="protein sequence ID" value="AAX60897.1"/>
    <property type="molecule type" value="Genomic_DNA"/>
</dbReference>
<dbReference type="EMBL" id="AY906552">
    <property type="protein sequence ID" value="AAX60898.1"/>
    <property type="molecule type" value="Genomic_DNA"/>
</dbReference>
<dbReference type="EMBL" id="AY906553">
    <property type="protein sequence ID" value="AAX60899.1"/>
    <property type="molecule type" value="Genomic_DNA"/>
</dbReference>
<dbReference type="EMBL" id="AY906554">
    <property type="protein sequence ID" value="AAX60900.1"/>
    <property type="molecule type" value="Genomic_DNA"/>
</dbReference>
<dbReference type="EMBL" id="AY906555">
    <property type="protein sequence ID" value="AAX60901.1"/>
    <property type="molecule type" value="Genomic_DNA"/>
</dbReference>
<dbReference type="EMBL" id="AY906556">
    <property type="protein sequence ID" value="AAX60902.1"/>
    <property type="molecule type" value="Genomic_DNA"/>
</dbReference>
<dbReference type="EMBL" id="AY906557">
    <property type="protein sequence ID" value="AAX60903.1"/>
    <property type="molecule type" value="Genomic_DNA"/>
</dbReference>
<dbReference type="EMBL" id="AY906558">
    <property type="protein sequence ID" value="AAX60904.1"/>
    <property type="molecule type" value="Genomic_DNA"/>
</dbReference>
<dbReference type="EMBL" id="AY906559">
    <property type="protein sequence ID" value="AAX60905.1"/>
    <property type="molecule type" value="Genomic_DNA"/>
</dbReference>
<dbReference type="EMBL" id="AY906560">
    <property type="protein sequence ID" value="AAX60906.1"/>
    <property type="molecule type" value="Genomic_DNA"/>
</dbReference>
<dbReference type="EMBL" id="AY906561">
    <property type="protein sequence ID" value="AAX60907.1"/>
    <property type="molecule type" value="Genomic_DNA"/>
</dbReference>
<dbReference type="EMBL" id="AY906562">
    <property type="protein sequence ID" value="AAX60908.1"/>
    <property type="molecule type" value="Genomic_DNA"/>
</dbReference>
<dbReference type="EMBL" id="AY906563">
    <property type="protein sequence ID" value="AAX60909.1"/>
    <property type="molecule type" value="Genomic_DNA"/>
</dbReference>
<dbReference type="EMBL" id="AY906564">
    <property type="protein sequence ID" value="AAX60910.1"/>
    <property type="molecule type" value="Genomic_DNA"/>
</dbReference>
<dbReference type="EMBL" id="AY906565">
    <property type="protein sequence ID" value="AAX60911.1"/>
    <property type="molecule type" value="Genomic_DNA"/>
</dbReference>
<dbReference type="EMBL" id="AY906566">
    <property type="protein sequence ID" value="AAX60912.1"/>
    <property type="molecule type" value="Genomic_DNA"/>
</dbReference>
<dbReference type="EMBL" id="AY906567">
    <property type="protein sequence ID" value="AAX60913.1"/>
    <property type="molecule type" value="Genomic_DNA"/>
</dbReference>
<dbReference type="EMBL" id="AY906568">
    <property type="protein sequence ID" value="AAX60914.1"/>
    <property type="molecule type" value="Genomic_DNA"/>
</dbReference>
<dbReference type="EMBL" id="AY906569">
    <property type="protein sequence ID" value="AAX60915.1"/>
    <property type="molecule type" value="Genomic_DNA"/>
</dbReference>
<dbReference type="EMBL" id="AY906570">
    <property type="protein sequence ID" value="AAX60916.1"/>
    <property type="molecule type" value="Genomic_DNA"/>
</dbReference>
<dbReference type="EMBL" id="AY906571">
    <property type="protein sequence ID" value="AAX60917.1"/>
    <property type="molecule type" value="Genomic_DNA"/>
</dbReference>
<dbReference type="EMBL" id="AY906572">
    <property type="protein sequence ID" value="AAX60918.1"/>
    <property type="molecule type" value="Genomic_DNA"/>
</dbReference>
<dbReference type="EMBL" id="AY906573">
    <property type="protein sequence ID" value="AAX60919.1"/>
    <property type="molecule type" value="Genomic_DNA"/>
</dbReference>
<dbReference type="EMBL" id="AY906574">
    <property type="protein sequence ID" value="AAX60920.1"/>
    <property type="molecule type" value="Genomic_DNA"/>
</dbReference>
<dbReference type="EMBL" id="AY906575">
    <property type="protein sequence ID" value="AAX60921.1"/>
    <property type="molecule type" value="Genomic_DNA"/>
</dbReference>
<dbReference type="EMBL" id="AY906576">
    <property type="protein sequence ID" value="AAX60922.1"/>
    <property type="molecule type" value="Genomic_DNA"/>
</dbReference>
<dbReference type="EMBL" id="AY906577">
    <property type="protein sequence ID" value="AAX60923.1"/>
    <property type="molecule type" value="Genomic_DNA"/>
</dbReference>
<dbReference type="EMBL" id="AY906578">
    <property type="protein sequence ID" value="AAX60924.1"/>
    <property type="molecule type" value="Genomic_DNA"/>
</dbReference>
<dbReference type="EMBL" id="AY906579">
    <property type="protein sequence ID" value="AAX60925.1"/>
    <property type="molecule type" value="Genomic_DNA"/>
</dbReference>
<dbReference type="EMBL" id="AY906580">
    <property type="protein sequence ID" value="AAX60926.1"/>
    <property type="molecule type" value="Genomic_DNA"/>
</dbReference>
<dbReference type="EMBL" id="AY906581">
    <property type="protein sequence ID" value="AAX60927.1"/>
    <property type="molecule type" value="Genomic_DNA"/>
</dbReference>
<dbReference type="EMBL" id="AY906582">
    <property type="protein sequence ID" value="AAX60928.1"/>
    <property type="molecule type" value="Genomic_DNA"/>
</dbReference>
<dbReference type="EMBL" id="AY906583">
    <property type="protein sequence ID" value="AAX60929.1"/>
    <property type="molecule type" value="Genomic_DNA"/>
</dbReference>
<dbReference type="EMBL" id="AY906584">
    <property type="protein sequence ID" value="AAX60930.1"/>
    <property type="molecule type" value="Genomic_DNA"/>
</dbReference>
<dbReference type="EMBL" id="AY906585">
    <property type="protein sequence ID" value="AAX60931.1"/>
    <property type="molecule type" value="Genomic_DNA"/>
</dbReference>
<dbReference type="EMBL" id="AY906586">
    <property type="protein sequence ID" value="AAX60932.1"/>
    <property type="molecule type" value="Genomic_DNA"/>
</dbReference>
<dbReference type="EMBL" id="AY906587">
    <property type="protein sequence ID" value="AAX60933.1"/>
    <property type="molecule type" value="Genomic_DNA"/>
</dbReference>
<dbReference type="EMBL" id="AY906588">
    <property type="protein sequence ID" value="AAX60934.1"/>
    <property type="molecule type" value="Genomic_DNA"/>
</dbReference>
<dbReference type="EMBL" id="AY906589">
    <property type="protein sequence ID" value="AAX60935.1"/>
    <property type="molecule type" value="Genomic_DNA"/>
</dbReference>
<dbReference type="EMBL" id="AY906590">
    <property type="protein sequence ID" value="AAX60936.1"/>
    <property type="molecule type" value="Genomic_DNA"/>
</dbReference>
<dbReference type="EMBL" id="AY906591">
    <property type="protein sequence ID" value="AAX60937.1"/>
    <property type="molecule type" value="Genomic_DNA"/>
</dbReference>
<dbReference type="EMBL" id="AY906592">
    <property type="protein sequence ID" value="AAX60938.1"/>
    <property type="molecule type" value="Genomic_DNA"/>
</dbReference>
<dbReference type="EMBL" id="AY906593">
    <property type="protein sequence ID" value="AAX60939.1"/>
    <property type="molecule type" value="Genomic_DNA"/>
</dbReference>
<dbReference type="EMBL" id="AY906594">
    <property type="protein sequence ID" value="AAX60940.1"/>
    <property type="molecule type" value="Genomic_DNA"/>
</dbReference>
<dbReference type="EMBL" id="AY906595">
    <property type="protein sequence ID" value="AAX60941.1"/>
    <property type="molecule type" value="Genomic_DNA"/>
</dbReference>
<dbReference type="EMBL" id="AY906596">
    <property type="protein sequence ID" value="AAX60942.1"/>
    <property type="molecule type" value="Genomic_DNA"/>
</dbReference>
<dbReference type="EMBL" id="AY906597">
    <property type="protein sequence ID" value="AAX60943.1"/>
    <property type="molecule type" value="Genomic_DNA"/>
</dbReference>
<dbReference type="EMBL" id="AY906598">
    <property type="protein sequence ID" value="AAX60944.1"/>
    <property type="molecule type" value="Genomic_DNA"/>
</dbReference>
<dbReference type="EMBL" id="AY906599">
    <property type="protein sequence ID" value="AAX60945.1"/>
    <property type="molecule type" value="Genomic_DNA"/>
</dbReference>
<dbReference type="EMBL" id="AY906600">
    <property type="protein sequence ID" value="AAX60946.1"/>
    <property type="molecule type" value="Genomic_DNA"/>
</dbReference>
<dbReference type="EMBL" id="AY906601">
    <property type="protein sequence ID" value="AAX60947.1"/>
    <property type="molecule type" value="Genomic_DNA"/>
</dbReference>
<dbReference type="EMBL" id="AY906602">
    <property type="protein sequence ID" value="AAX60948.1"/>
    <property type="molecule type" value="Genomic_DNA"/>
</dbReference>
<dbReference type="EMBL" id="AY906603">
    <property type="protein sequence ID" value="AAX60949.1"/>
    <property type="molecule type" value="Genomic_DNA"/>
</dbReference>
<dbReference type="EMBL" id="AY906604">
    <property type="protein sequence ID" value="AAX60950.1"/>
    <property type="molecule type" value="Genomic_DNA"/>
</dbReference>
<dbReference type="EMBL" id="AY906605">
    <property type="protein sequence ID" value="AAX60951.1"/>
    <property type="molecule type" value="Genomic_DNA"/>
</dbReference>
<dbReference type="EMBL" id="AY906606">
    <property type="protein sequence ID" value="AAX60952.1"/>
    <property type="molecule type" value="Genomic_DNA"/>
</dbReference>
<dbReference type="EMBL" id="AY906607">
    <property type="protein sequence ID" value="AAX60953.1"/>
    <property type="molecule type" value="Genomic_DNA"/>
</dbReference>
<dbReference type="EMBL" id="AY906608">
    <property type="protein sequence ID" value="AAX60954.1"/>
    <property type="molecule type" value="Genomic_DNA"/>
</dbReference>
<dbReference type="EMBL" id="AY906609">
    <property type="protein sequence ID" value="AAX60955.1"/>
    <property type="molecule type" value="Genomic_DNA"/>
</dbReference>
<dbReference type="EMBL" id="AY906610">
    <property type="protein sequence ID" value="AAX60956.1"/>
    <property type="molecule type" value="Genomic_DNA"/>
</dbReference>
<dbReference type="EMBL" id="AY906611">
    <property type="protein sequence ID" value="AAX60957.1"/>
    <property type="molecule type" value="Genomic_DNA"/>
</dbReference>
<dbReference type="EMBL" id="AY906612">
    <property type="protein sequence ID" value="AAX60958.1"/>
    <property type="molecule type" value="Genomic_DNA"/>
</dbReference>
<dbReference type="EMBL" id="AY906613">
    <property type="protein sequence ID" value="AAX60959.1"/>
    <property type="molecule type" value="Genomic_DNA"/>
</dbReference>
<dbReference type="EMBL" id="AY906614">
    <property type="protein sequence ID" value="AAX60960.1"/>
    <property type="molecule type" value="Genomic_DNA"/>
</dbReference>
<dbReference type="EMBL" id="AY906615">
    <property type="protein sequence ID" value="AAX60961.1"/>
    <property type="molecule type" value="Genomic_DNA"/>
</dbReference>
<dbReference type="EMBL" id="AY906616">
    <property type="protein sequence ID" value="AAX60962.1"/>
    <property type="molecule type" value="Genomic_DNA"/>
</dbReference>
<dbReference type="EMBL" id="AY906617">
    <property type="protein sequence ID" value="AAX60963.1"/>
    <property type="molecule type" value="Genomic_DNA"/>
</dbReference>
<dbReference type="EMBL" id="AY906618">
    <property type="protein sequence ID" value="AAX60964.1"/>
    <property type="molecule type" value="Genomic_DNA"/>
</dbReference>
<dbReference type="EMBL" id="AY906619">
    <property type="protein sequence ID" value="AAX60965.1"/>
    <property type="molecule type" value="Genomic_DNA"/>
</dbReference>
<dbReference type="EMBL" id="AY906620">
    <property type="protein sequence ID" value="AAX60966.1"/>
    <property type="molecule type" value="Genomic_DNA"/>
</dbReference>
<dbReference type="EMBL" id="AY906621">
    <property type="protein sequence ID" value="AAX60967.1"/>
    <property type="molecule type" value="Genomic_DNA"/>
</dbReference>
<dbReference type="EMBL" id="AY906622">
    <property type="protein sequence ID" value="AAX60968.1"/>
    <property type="molecule type" value="Genomic_DNA"/>
</dbReference>
<dbReference type="EMBL" id="AY906623">
    <property type="protein sequence ID" value="AAX60969.1"/>
    <property type="molecule type" value="Genomic_DNA"/>
</dbReference>
<dbReference type="EMBL" id="AY906624">
    <property type="protein sequence ID" value="AAX60970.1"/>
    <property type="molecule type" value="Genomic_DNA"/>
</dbReference>
<dbReference type="EMBL" id="AY906625">
    <property type="protein sequence ID" value="AAX60971.1"/>
    <property type="molecule type" value="Genomic_DNA"/>
</dbReference>
<dbReference type="EMBL" id="AY906626">
    <property type="protein sequence ID" value="AAX60972.1"/>
    <property type="molecule type" value="Genomic_DNA"/>
</dbReference>
<dbReference type="EMBL" id="AY906627">
    <property type="protein sequence ID" value="AAX60973.1"/>
    <property type="molecule type" value="Genomic_DNA"/>
</dbReference>
<dbReference type="EMBL" id="AY906628">
    <property type="protein sequence ID" value="AAX60974.1"/>
    <property type="molecule type" value="Genomic_DNA"/>
</dbReference>
<dbReference type="EMBL" id="AY906629">
    <property type="protein sequence ID" value="AAX60975.1"/>
    <property type="molecule type" value="Genomic_DNA"/>
</dbReference>
<dbReference type="EMBL" id="AY906630">
    <property type="protein sequence ID" value="AAX60976.1"/>
    <property type="molecule type" value="Genomic_DNA"/>
</dbReference>
<dbReference type="EMBL" id="AY906631">
    <property type="protein sequence ID" value="AAX60977.1"/>
    <property type="molecule type" value="Genomic_DNA"/>
</dbReference>
<dbReference type="EMBL" id="AY906632">
    <property type="protein sequence ID" value="AAX60978.1"/>
    <property type="molecule type" value="Genomic_DNA"/>
</dbReference>
<dbReference type="EMBL" id="AY906633">
    <property type="protein sequence ID" value="AAX60979.1"/>
    <property type="molecule type" value="Genomic_DNA"/>
</dbReference>
<dbReference type="EMBL" id="AY906634">
    <property type="protein sequence ID" value="AAX60980.1"/>
    <property type="molecule type" value="Genomic_DNA"/>
</dbReference>
<dbReference type="EMBL" id="AY906635">
    <property type="protein sequence ID" value="AAX60981.1"/>
    <property type="molecule type" value="Genomic_DNA"/>
</dbReference>
<dbReference type="EMBL" id="AY906636">
    <property type="protein sequence ID" value="AAX60982.1"/>
    <property type="molecule type" value="Genomic_DNA"/>
</dbReference>
<dbReference type="EMBL" id="AY906637">
    <property type="protein sequence ID" value="AAX60983.1"/>
    <property type="molecule type" value="Genomic_DNA"/>
</dbReference>
<dbReference type="EMBL" id="AY906638">
    <property type="protein sequence ID" value="AAX60984.1"/>
    <property type="molecule type" value="Genomic_DNA"/>
</dbReference>
<dbReference type="EMBL" id="AY906639">
    <property type="protein sequence ID" value="AAX60985.1"/>
    <property type="molecule type" value="Genomic_DNA"/>
</dbReference>
<dbReference type="EMBL" id="AY906640">
    <property type="protein sequence ID" value="AAX60986.1"/>
    <property type="molecule type" value="Genomic_DNA"/>
</dbReference>
<dbReference type="EMBL" id="AY906641">
    <property type="protein sequence ID" value="AAX60987.1"/>
    <property type="molecule type" value="Genomic_DNA"/>
</dbReference>
<dbReference type="EMBL" id="AY906642">
    <property type="protein sequence ID" value="AAX60988.1"/>
    <property type="molecule type" value="Genomic_DNA"/>
</dbReference>
<dbReference type="EMBL" id="AY906643">
    <property type="protein sequence ID" value="AAX60989.1"/>
    <property type="molecule type" value="Genomic_DNA"/>
</dbReference>
<dbReference type="EMBL" id="AY906644">
    <property type="protein sequence ID" value="AAX60990.1"/>
    <property type="molecule type" value="Genomic_DNA"/>
</dbReference>
<dbReference type="EMBL" id="AY906645">
    <property type="protein sequence ID" value="AAX60991.1"/>
    <property type="molecule type" value="Genomic_DNA"/>
</dbReference>
<dbReference type="EMBL" id="AY906646">
    <property type="protein sequence ID" value="AAX60992.1"/>
    <property type="molecule type" value="Genomic_DNA"/>
</dbReference>
<dbReference type="EMBL" id="AY906647">
    <property type="protein sequence ID" value="AAX60993.1"/>
    <property type="molecule type" value="Genomic_DNA"/>
</dbReference>
<dbReference type="EMBL" id="AY906648">
    <property type="protein sequence ID" value="AAX60994.1"/>
    <property type="molecule type" value="Genomic_DNA"/>
</dbReference>
<dbReference type="EMBL" id="AY906649">
    <property type="protein sequence ID" value="AAX60995.1"/>
    <property type="molecule type" value="Genomic_DNA"/>
</dbReference>
<dbReference type="EMBL" id="AY906650">
    <property type="protein sequence ID" value="AAX60996.1"/>
    <property type="molecule type" value="Genomic_DNA"/>
</dbReference>
<dbReference type="EMBL" id="AY906651">
    <property type="protein sequence ID" value="AAX60997.1"/>
    <property type="molecule type" value="Genomic_DNA"/>
</dbReference>
<dbReference type="EMBL" id="AY906652">
    <property type="protein sequence ID" value="AAX60998.1"/>
    <property type="molecule type" value="Genomic_DNA"/>
</dbReference>
<dbReference type="EMBL" id="AY906653">
    <property type="protein sequence ID" value="AAX60999.1"/>
    <property type="molecule type" value="Genomic_DNA"/>
</dbReference>
<dbReference type="EMBL" id="AY906654">
    <property type="protein sequence ID" value="AAX61000.1"/>
    <property type="molecule type" value="Genomic_DNA"/>
</dbReference>
<dbReference type="EMBL" id="AY906655">
    <property type="protein sequence ID" value="AAX61001.1"/>
    <property type="molecule type" value="Genomic_DNA"/>
</dbReference>
<dbReference type="EMBL" id="AY906656">
    <property type="protein sequence ID" value="AAX61002.1"/>
    <property type="molecule type" value="Genomic_DNA"/>
</dbReference>
<dbReference type="EMBL" id="AY906657">
    <property type="protein sequence ID" value="AAX61003.1"/>
    <property type="molecule type" value="Genomic_DNA"/>
</dbReference>
<dbReference type="EMBL" id="AY906658">
    <property type="protein sequence ID" value="AAX61004.1"/>
    <property type="molecule type" value="Genomic_DNA"/>
</dbReference>
<dbReference type="EMBL" id="AY906659">
    <property type="protein sequence ID" value="AAX61005.1"/>
    <property type="molecule type" value="Genomic_DNA"/>
</dbReference>
<dbReference type="EMBL" id="AY906660">
    <property type="protein sequence ID" value="AAX61006.1"/>
    <property type="molecule type" value="Genomic_DNA"/>
</dbReference>
<dbReference type="EMBL" id="AY906661">
    <property type="protein sequence ID" value="AAX61007.1"/>
    <property type="molecule type" value="Genomic_DNA"/>
</dbReference>
<dbReference type="EMBL" id="AY906662">
    <property type="protein sequence ID" value="AAX61008.1"/>
    <property type="molecule type" value="Genomic_DNA"/>
</dbReference>
<dbReference type="EMBL" id="AY906663">
    <property type="protein sequence ID" value="AAX61009.1"/>
    <property type="molecule type" value="Genomic_DNA"/>
</dbReference>
<dbReference type="EMBL" id="AY906664">
    <property type="protein sequence ID" value="AAX61010.1"/>
    <property type="molecule type" value="Genomic_DNA"/>
</dbReference>
<dbReference type="EMBL" id="AY906665">
    <property type="protein sequence ID" value="AAX61011.1"/>
    <property type="molecule type" value="Genomic_DNA"/>
</dbReference>
<dbReference type="EMBL" id="AY906666">
    <property type="protein sequence ID" value="AAX61012.1"/>
    <property type="molecule type" value="Genomic_DNA"/>
</dbReference>
<dbReference type="EMBL" id="AY906667">
    <property type="protein sequence ID" value="AAX61013.1"/>
    <property type="molecule type" value="Genomic_DNA"/>
</dbReference>
<dbReference type="EMBL" id="AY906668">
    <property type="protein sequence ID" value="AAX61014.1"/>
    <property type="molecule type" value="Genomic_DNA"/>
</dbReference>
<dbReference type="EMBL" id="AY906669">
    <property type="protein sequence ID" value="AAX61015.1"/>
    <property type="molecule type" value="Genomic_DNA"/>
</dbReference>
<dbReference type="EMBL" id="AY906670">
    <property type="protein sequence ID" value="AAX61016.1"/>
    <property type="molecule type" value="Genomic_DNA"/>
</dbReference>
<dbReference type="EMBL" id="AY906671">
    <property type="protein sequence ID" value="AAX61017.1"/>
    <property type="molecule type" value="Genomic_DNA"/>
</dbReference>
<dbReference type="EMBL" id="AY906672">
    <property type="protein sequence ID" value="AAX61018.1"/>
    <property type="molecule type" value="Genomic_DNA"/>
</dbReference>
<dbReference type="EMBL" id="AY906673">
    <property type="protein sequence ID" value="AAX61019.1"/>
    <property type="molecule type" value="Genomic_DNA"/>
</dbReference>
<dbReference type="EMBL" id="AY906674">
    <property type="protein sequence ID" value="AAX61020.1"/>
    <property type="molecule type" value="Genomic_DNA"/>
</dbReference>
<dbReference type="EMBL" id="AY906675">
    <property type="protein sequence ID" value="AAX61021.1"/>
    <property type="molecule type" value="Genomic_DNA"/>
</dbReference>
<dbReference type="EMBL" id="AY906676">
    <property type="protein sequence ID" value="AAX61022.1"/>
    <property type="molecule type" value="Genomic_DNA"/>
</dbReference>
<dbReference type="EMBL" id="AY906677">
    <property type="protein sequence ID" value="AAX61023.1"/>
    <property type="molecule type" value="Genomic_DNA"/>
</dbReference>
<dbReference type="EMBL" id="AY906678">
    <property type="protein sequence ID" value="AAX61024.1"/>
    <property type="molecule type" value="Genomic_DNA"/>
</dbReference>
<dbReference type="EMBL" id="AY906679">
    <property type="protein sequence ID" value="AAX61025.1"/>
    <property type="molecule type" value="Genomic_DNA"/>
</dbReference>
<dbReference type="EMBL" id="AY906680">
    <property type="protein sequence ID" value="AAX61026.1"/>
    <property type="molecule type" value="Genomic_DNA"/>
</dbReference>
<dbReference type="EMBL" id="AY906681">
    <property type="protein sequence ID" value="AAX61027.1"/>
    <property type="molecule type" value="Genomic_DNA"/>
</dbReference>
<dbReference type="EMBL" id="AY906682">
    <property type="protein sequence ID" value="AAX61028.1"/>
    <property type="molecule type" value="Genomic_DNA"/>
</dbReference>
<dbReference type="EMBL" id="AY906683">
    <property type="protein sequence ID" value="AAX61029.1"/>
    <property type="molecule type" value="Genomic_DNA"/>
</dbReference>
<dbReference type="EMBL" id="AY906684">
    <property type="protein sequence ID" value="AAX61030.1"/>
    <property type="molecule type" value="Genomic_DNA"/>
</dbReference>
<dbReference type="EMBL" id="AY906685">
    <property type="protein sequence ID" value="AAX61031.1"/>
    <property type="molecule type" value="Genomic_DNA"/>
</dbReference>
<dbReference type="EMBL" id="AY906686">
    <property type="protein sequence ID" value="AAX61032.1"/>
    <property type="molecule type" value="Genomic_DNA"/>
</dbReference>
<dbReference type="EMBL" id="AY906687">
    <property type="protein sequence ID" value="AAX61033.1"/>
    <property type="molecule type" value="Genomic_DNA"/>
</dbReference>
<dbReference type="EMBL" id="AY906688">
    <property type="protein sequence ID" value="AAX61034.1"/>
    <property type="molecule type" value="Genomic_DNA"/>
</dbReference>
<dbReference type="EMBL" id="AY906689">
    <property type="protein sequence ID" value="AAX61035.1"/>
    <property type="molecule type" value="Genomic_DNA"/>
</dbReference>
<dbReference type="EMBL" id="AY906690">
    <property type="protein sequence ID" value="AAX61036.1"/>
    <property type="molecule type" value="Genomic_DNA"/>
</dbReference>
<dbReference type="EMBL" id="AY906691">
    <property type="protein sequence ID" value="AAX61037.1"/>
    <property type="molecule type" value="Genomic_DNA"/>
</dbReference>
<dbReference type="EMBL" id="AY906692">
    <property type="protein sequence ID" value="AAX61038.1"/>
    <property type="molecule type" value="Genomic_DNA"/>
</dbReference>
<dbReference type="EMBL" id="AY906693">
    <property type="protein sequence ID" value="AAX61039.1"/>
    <property type="molecule type" value="Genomic_DNA"/>
</dbReference>
<dbReference type="EMBL" id="AY906694">
    <property type="protein sequence ID" value="AAX61040.1"/>
    <property type="molecule type" value="Genomic_DNA"/>
</dbReference>
<dbReference type="EMBL" id="AY906695">
    <property type="protein sequence ID" value="AAX61041.1"/>
    <property type="molecule type" value="Genomic_DNA"/>
</dbReference>
<dbReference type="EMBL" id="AY906696">
    <property type="protein sequence ID" value="AAX61042.1"/>
    <property type="molecule type" value="Genomic_DNA"/>
</dbReference>
<dbReference type="EMBL" id="AY906697">
    <property type="protein sequence ID" value="AAX61043.1"/>
    <property type="molecule type" value="Genomic_DNA"/>
</dbReference>
<dbReference type="EMBL" id="AY906698">
    <property type="protein sequence ID" value="AAX61044.1"/>
    <property type="molecule type" value="Genomic_DNA"/>
</dbReference>
<dbReference type="EMBL" id="AY906699">
    <property type="protein sequence ID" value="AAX61045.1"/>
    <property type="molecule type" value="Genomic_DNA"/>
</dbReference>
<dbReference type="EMBL" id="AY906700">
    <property type="protein sequence ID" value="AAX61046.1"/>
    <property type="molecule type" value="Genomic_DNA"/>
</dbReference>
<dbReference type="EMBL" id="AY906701">
    <property type="protein sequence ID" value="AAX61047.1"/>
    <property type="molecule type" value="Genomic_DNA"/>
</dbReference>
<dbReference type="EMBL" id="AY906702">
    <property type="protein sequence ID" value="AAX61048.1"/>
    <property type="molecule type" value="Genomic_DNA"/>
</dbReference>
<dbReference type="EMBL" id="AY906703">
    <property type="protein sequence ID" value="AAX61049.1"/>
    <property type="molecule type" value="Genomic_DNA"/>
</dbReference>
<dbReference type="EMBL" id="AY906704">
    <property type="protein sequence ID" value="AAX61050.1"/>
    <property type="molecule type" value="Genomic_DNA"/>
</dbReference>
<dbReference type="EMBL" id="AY906705">
    <property type="protein sequence ID" value="AAX61051.1"/>
    <property type="molecule type" value="Genomic_DNA"/>
</dbReference>
<dbReference type="EMBL" id="AY906706">
    <property type="protein sequence ID" value="AAX61052.1"/>
    <property type="molecule type" value="Genomic_DNA"/>
</dbReference>
<dbReference type="EMBL" id="AY906707">
    <property type="protein sequence ID" value="AAX61053.1"/>
    <property type="molecule type" value="Genomic_DNA"/>
</dbReference>
<dbReference type="EMBL" id="AY906708">
    <property type="protein sequence ID" value="AAX61054.1"/>
    <property type="molecule type" value="Genomic_DNA"/>
</dbReference>
<dbReference type="EMBL" id="AY906709">
    <property type="protein sequence ID" value="AAX61055.1"/>
    <property type="molecule type" value="Genomic_DNA"/>
</dbReference>
<dbReference type="EMBL" id="AY906711">
    <property type="protein sequence ID" value="AAX61057.1"/>
    <property type="molecule type" value="Genomic_DNA"/>
</dbReference>
<dbReference type="EMBL" id="AY906712">
    <property type="protein sequence ID" value="AAX61058.1"/>
    <property type="molecule type" value="Genomic_DNA"/>
</dbReference>
<dbReference type="EMBL" id="AY906713">
    <property type="protein sequence ID" value="AAX61059.1"/>
    <property type="molecule type" value="Genomic_DNA"/>
</dbReference>
<dbReference type="EMBL" id="AY906714">
    <property type="protein sequence ID" value="AAX61060.1"/>
    <property type="molecule type" value="Genomic_DNA"/>
</dbReference>
<dbReference type="EMBL" id="AY906715">
    <property type="protein sequence ID" value="AAX61061.1"/>
    <property type="molecule type" value="Genomic_DNA"/>
</dbReference>
<dbReference type="EMBL" id="AY906716">
    <property type="protein sequence ID" value="AAX61062.1"/>
    <property type="molecule type" value="Genomic_DNA"/>
</dbReference>
<dbReference type="EMBL" id="AY906717">
    <property type="protein sequence ID" value="AAX61063.1"/>
    <property type="molecule type" value="Genomic_DNA"/>
</dbReference>
<dbReference type="EMBL" id="AY906718">
    <property type="protein sequence ID" value="AAX61064.1"/>
    <property type="molecule type" value="Genomic_DNA"/>
</dbReference>
<dbReference type="EMBL" id="AY906719">
    <property type="protein sequence ID" value="AAX61065.1"/>
    <property type="molecule type" value="Genomic_DNA"/>
</dbReference>
<dbReference type="EMBL" id="AY906720">
    <property type="protein sequence ID" value="AAX61066.1"/>
    <property type="molecule type" value="Genomic_DNA"/>
</dbReference>
<dbReference type="EMBL" id="AY906721">
    <property type="protein sequence ID" value="AAX61067.1"/>
    <property type="molecule type" value="Genomic_DNA"/>
</dbReference>
<dbReference type="EMBL" id="AY906722">
    <property type="protein sequence ID" value="AAX61068.1"/>
    <property type="molecule type" value="Genomic_DNA"/>
</dbReference>
<dbReference type="EMBL" id="AY906723">
    <property type="protein sequence ID" value="AAX61069.1"/>
    <property type="molecule type" value="Genomic_DNA"/>
</dbReference>
<dbReference type="EMBL" id="AY906724">
    <property type="protein sequence ID" value="AAX61070.1"/>
    <property type="molecule type" value="Genomic_DNA"/>
</dbReference>
<dbReference type="EMBL" id="AY906725">
    <property type="protein sequence ID" value="AAX61071.1"/>
    <property type="molecule type" value="Genomic_DNA"/>
</dbReference>
<dbReference type="EMBL" id="AY906726">
    <property type="protein sequence ID" value="AAX61072.1"/>
    <property type="molecule type" value="Genomic_DNA"/>
</dbReference>
<dbReference type="EMBL" id="AY906727">
    <property type="protein sequence ID" value="AAX61073.1"/>
    <property type="molecule type" value="Genomic_DNA"/>
</dbReference>
<dbReference type="EMBL" id="AY906728">
    <property type="protein sequence ID" value="AAX61074.1"/>
    <property type="molecule type" value="Genomic_DNA"/>
</dbReference>
<dbReference type="EMBL" id="AY906729">
    <property type="protein sequence ID" value="AAX61075.1"/>
    <property type="molecule type" value="Genomic_DNA"/>
</dbReference>
<dbReference type="EMBL" id="AY906730">
    <property type="protein sequence ID" value="AAX61076.1"/>
    <property type="molecule type" value="Genomic_DNA"/>
</dbReference>
<dbReference type="EMBL" id="AY906731">
    <property type="protein sequence ID" value="AAX61077.1"/>
    <property type="molecule type" value="Genomic_DNA"/>
</dbReference>
<dbReference type="EMBL" id="AY906732">
    <property type="protein sequence ID" value="AAX61078.1"/>
    <property type="molecule type" value="Genomic_DNA"/>
</dbReference>
<dbReference type="EMBL" id="AY906733">
    <property type="protein sequence ID" value="AAX61079.1"/>
    <property type="molecule type" value="Genomic_DNA"/>
</dbReference>
<dbReference type="EMBL" id="AY906734">
    <property type="protein sequence ID" value="AAX61080.1"/>
    <property type="molecule type" value="Genomic_DNA"/>
</dbReference>
<dbReference type="EMBL" id="AY906735">
    <property type="protein sequence ID" value="AAX61081.1"/>
    <property type="molecule type" value="Genomic_DNA"/>
</dbReference>
<dbReference type="EMBL" id="AY906736">
    <property type="protein sequence ID" value="AAX61082.1"/>
    <property type="molecule type" value="Genomic_DNA"/>
</dbReference>
<dbReference type="EMBL" id="AY906737">
    <property type="protein sequence ID" value="AAX61083.1"/>
    <property type="molecule type" value="Genomic_DNA"/>
</dbReference>
<dbReference type="EMBL" id="AY906738">
    <property type="protein sequence ID" value="AAX61084.1"/>
    <property type="molecule type" value="Genomic_DNA"/>
</dbReference>
<dbReference type="EMBL" id="AY906739">
    <property type="protein sequence ID" value="AAX61085.1"/>
    <property type="molecule type" value="Genomic_DNA"/>
</dbReference>
<dbReference type="EMBL" id="AY906740">
    <property type="protein sequence ID" value="AAX61086.1"/>
    <property type="molecule type" value="Genomic_DNA"/>
</dbReference>
<dbReference type="EMBL" id="AY906741">
    <property type="protein sequence ID" value="AAX61087.1"/>
    <property type="molecule type" value="Genomic_DNA"/>
</dbReference>
<dbReference type="EMBL" id="AY906742">
    <property type="protein sequence ID" value="AAX61088.1"/>
    <property type="molecule type" value="Genomic_DNA"/>
</dbReference>
<dbReference type="EMBL" id="AY906743">
    <property type="protein sequence ID" value="AAX61089.1"/>
    <property type="molecule type" value="Genomic_DNA"/>
</dbReference>
<dbReference type="EMBL" id="AY906745">
    <property type="protein sequence ID" value="AAX61091.1"/>
    <property type="molecule type" value="Genomic_DNA"/>
</dbReference>
<dbReference type="EMBL" id="AY906746">
    <property type="protein sequence ID" value="AAX61092.1"/>
    <property type="molecule type" value="Genomic_DNA"/>
</dbReference>
<dbReference type="EMBL" id="AY906747">
    <property type="protein sequence ID" value="AAX61093.1"/>
    <property type="molecule type" value="Genomic_DNA"/>
</dbReference>
<dbReference type="EMBL" id="AY906748">
    <property type="protein sequence ID" value="AAX61094.1"/>
    <property type="molecule type" value="Genomic_DNA"/>
</dbReference>
<dbReference type="EMBL" id="AY906749">
    <property type="protein sequence ID" value="AAX61095.1"/>
    <property type="molecule type" value="Genomic_DNA"/>
</dbReference>
<dbReference type="EMBL" id="AY906750">
    <property type="protein sequence ID" value="AAX61096.1"/>
    <property type="molecule type" value="Genomic_DNA"/>
</dbReference>
<dbReference type="EMBL" id="AY906751">
    <property type="protein sequence ID" value="AAX61097.1"/>
    <property type="molecule type" value="Genomic_DNA"/>
</dbReference>
<dbReference type="EMBL" id="AY906752">
    <property type="protein sequence ID" value="AAX61098.1"/>
    <property type="molecule type" value="Genomic_DNA"/>
</dbReference>
<dbReference type="EMBL" id="AY906753">
    <property type="protein sequence ID" value="AAX61099.1"/>
    <property type="molecule type" value="Genomic_DNA"/>
</dbReference>
<dbReference type="EMBL" id="AY906754">
    <property type="protein sequence ID" value="AAX61100.1"/>
    <property type="molecule type" value="Genomic_DNA"/>
</dbReference>
<dbReference type="EMBL" id="AY906755">
    <property type="protein sequence ID" value="AAX61101.1"/>
    <property type="molecule type" value="Genomic_DNA"/>
</dbReference>
<dbReference type="EMBL" id="AY906756">
    <property type="protein sequence ID" value="AAX61102.1"/>
    <property type="molecule type" value="Genomic_DNA"/>
</dbReference>
<dbReference type="EMBL" id="AY906757">
    <property type="protein sequence ID" value="AAX61103.1"/>
    <property type="molecule type" value="Genomic_DNA"/>
</dbReference>
<dbReference type="EMBL" id="AY906758">
    <property type="protein sequence ID" value="AAX61104.1"/>
    <property type="molecule type" value="Genomic_DNA"/>
</dbReference>
<dbReference type="EMBL" id="AY906759">
    <property type="protein sequence ID" value="AAX61105.1"/>
    <property type="molecule type" value="Genomic_DNA"/>
</dbReference>
<dbReference type="EMBL" id="AY906760">
    <property type="protein sequence ID" value="AAX61106.1"/>
    <property type="molecule type" value="Genomic_DNA"/>
</dbReference>
<dbReference type="EMBL" id="AY906761">
    <property type="protein sequence ID" value="AAX61107.1"/>
    <property type="molecule type" value="Genomic_DNA"/>
</dbReference>
<dbReference type="EMBL" id="AY906762">
    <property type="protein sequence ID" value="AAX61108.1"/>
    <property type="molecule type" value="Genomic_DNA"/>
</dbReference>
<dbReference type="EMBL" id="AY906763">
    <property type="protein sequence ID" value="AAX61109.1"/>
    <property type="molecule type" value="Genomic_DNA"/>
</dbReference>
<dbReference type="EMBL" id="AY906764">
    <property type="protein sequence ID" value="AAX61110.1"/>
    <property type="molecule type" value="Genomic_DNA"/>
</dbReference>
<dbReference type="EMBL" id="AY906765">
    <property type="protein sequence ID" value="AAX61111.1"/>
    <property type="molecule type" value="Genomic_DNA"/>
</dbReference>
<dbReference type="EMBL" id="AY906766">
    <property type="protein sequence ID" value="AAX61112.1"/>
    <property type="molecule type" value="Genomic_DNA"/>
</dbReference>
<dbReference type="EMBL" id="AY906767">
    <property type="protein sequence ID" value="AAX61113.1"/>
    <property type="molecule type" value="Genomic_DNA"/>
</dbReference>
<dbReference type="EMBL" id="AY906768">
    <property type="protein sequence ID" value="AAX61114.1"/>
    <property type="molecule type" value="Genomic_DNA"/>
</dbReference>
<dbReference type="EMBL" id="AY906769">
    <property type="protein sequence ID" value="AAX61115.1"/>
    <property type="molecule type" value="Genomic_DNA"/>
</dbReference>
<dbReference type="EMBL" id="AY906770">
    <property type="protein sequence ID" value="AAX61116.1"/>
    <property type="molecule type" value="Genomic_DNA"/>
</dbReference>
<dbReference type="EMBL" id="AY906771">
    <property type="protein sequence ID" value="AAX61117.1"/>
    <property type="molecule type" value="Genomic_DNA"/>
</dbReference>
<dbReference type="EMBL" id="AY906772">
    <property type="protein sequence ID" value="AAX61118.1"/>
    <property type="molecule type" value="Genomic_DNA"/>
</dbReference>
<dbReference type="EMBL" id="AY906773">
    <property type="protein sequence ID" value="AAX61119.1"/>
    <property type="molecule type" value="Genomic_DNA"/>
</dbReference>
<dbReference type="EMBL" id="AY906774">
    <property type="protein sequence ID" value="AAX61120.1"/>
    <property type="molecule type" value="Genomic_DNA"/>
</dbReference>
<dbReference type="EMBL" id="AY906775">
    <property type="protein sequence ID" value="AAX61121.1"/>
    <property type="molecule type" value="Genomic_DNA"/>
</dbReference>
<dbReference type="PIR" id="S03629">
    <property type="entry name" value="S03629"/>
</dbReference>
<dbReference type="RefSeq" id="NP_524511.1">
    <property type="nucleotide sequence ID" value="NM_079787.3"/>
</dbReference>
<dbReference type="SMR" id="P13096"/>
<dbReference type="BioGRID" id="68058">
    <property type="interactions" value="15"/>
</dbReference>
<dbReference type="DIP" id="DIP-627N"/>
<dbReference type="ELM" id="P13096"/>
<dbReference type="FunCoup" id="P13096">
    <property type="interactions" value="21"/>
</dbReference>
<dbReference type="IntAct" id="P13096">
    <property type="interactions" value="15"/>
</dbReference>
<dbReference type="MINT" id="P13096"/>
<dbReference type="STRING" id="7227.FBpp0084352"/>
<dbReference type="PaxDb" id="7227-FBpp0084352"/>
<dbReference type="EnsemblMetazoa" id="FBtr0084979">
    <property type="protein sequence ID" value="FBpp0084352"/>
    <property type="gene ID" value="FBgn0002631"/>
</dbReference>
<dbReference type="GeneID" id="43158"/>
<dbReference type="KEGG" id="dme:Dmel_CG6096"/>
<dbReference type="AGR" id="FB:FBgn0002631"/>
<dbReference type="CTD" id="43158"/>
<dbReference type="FlyBase" id="FBgn0002631">
    <property type="gene designation" value="E(spl)m5-HLH"/>
</dbReference>
<dbReference type="VEuPathDB" id="VectorBase:FBgn0002631"/>
<dbReference type="eggNOG" id="KOG4304">
    <property type="taxonomic scope" value="Eukaryota"/>
</dbReference>
<dbReference type="HOGENOM" id="CLU_068550_2_2_1"/>
<dbReference type="InParanoid" id="P13096"/>
<dbReference type="OMA" id="EETMWRP"/>
<dbReference type="OrthoDB" id="6085656at2759"/>
<dbReference type="PhylomeDB" id="P13096"/>
<dbReference type="SignaLink" id="P13096"/>
<dbReference type="BioGRID-ORCS" id="43158">
    <property type="hits" value="0 hits in 3 CRISPR screens"/>
</dbReference>
<dbReference type="ChiTaRS" id="E(spl)m5-HLH">
    <property type="organism name" value="fly"/>
</dbReference>
<dbReference type="GenomeRNAi" id="43158"/>
<dbReference type="PRO" id="PR:P13096"/>
<dbReference type="Proteomes" id="UP000000803">
    <property type="component" value="Chromosome 3R"/>
</dbReference>
<dbReference type="Bgee" id="FBgn0002631">
    <property type="expression patterns" value="Expressed in embryonic optic lobe primordium and 37 other cell types or tissues"/>
</dbReference>
<dbReference type="ExpressionAtlas" id="P13096">
    <property type="expression patterns" value="baseline and differential"/>
</dbReference>
<dbReference type="GO" id="GO:0005634">
    <property type="term" value="C:nucleus"/>
    <property type="evidence" value="ECO:0000314"/>
    <property type="project" value="FlyBase"/>
</dbReference>
<dbReference type="GO" id="GO:0001227">
    <property type="term" value="F:DNA-binding transcription repressor activity, RNA polymerase II-specific"/>
    <property type="evidence" value="ECO:0000314"/>
    <property type="project" value="FlyBase"/>
</dbReference>
<dbReference type="GO" id="GO:0046982">
    <property type="term" value="F:protein heterodimerization activity"/>
    <property type="evidence" value="ECO:0000353"/>
    <property type="project" value="FlyBase"/>
</dbReference>
<dbReference type="GO" id="GO:0042803">
    <property type="term" value="F:protein homodimerization activity"/>
    <property type="evidence" value="ECO:0000353"/>
    <property type="project" value="FlyBase"/>
</dbReference>
<dbReference type="GO" id="GO:0000978">
    <property type="term" value="F:RNA polymerase II cis-regulatory region sequence-specific DNA binding"/>
    <property type="evidence" value="ECO:0000318"/>
    <property type="project" value="GO_Central"/>
</dbReference>
<dbReference type="GO" id="GO:0043565">
    <property type="term" value="F:sequence-specific DNA binding"/>
    <property type="evidence" value="ECO:0000314"/>
    <property type="project" value="FlyBase"/>
</dbReference>
<dbReference type="GO" id="GO:0030154">
    <property type="term" value="P:cell differentiation"/>
    <property type="evidence" value="ECO:0007669"/>
    <property type="project" value="UniProtKB-KW"/>
</dbReference>
<dbReference type="GO" id="GO:0007399">
    <property type="term" value="P:nervous system development"/>
    <property type="evidence" value="ECO:0007669"/>
    <property type="project" value="UniProtKB-KW"/>
</dbReference>
<dbReference type="GO" id="GO:0050767">
    <property type="term" value="P:regulation of neurogenesis"/>
    <property type="evidence" value="ECO:0000318"/>
    <property type="project" value="GO_Central"/>
</dbReference>
<dbReference type="CDD" id="cd18916">
    <property type="entry name" value="bHLH-O_ESM5_like"/>
    <property type="match status" value="1"/>
</dbReference>
<dbReference type="FunFam" id="4.10.280.10:FF:000107">
    <property type="entry name" value="Basic helix-loop-helix transcription factor"/>
    <property type="match status" value="1"/>
</dbReference>
<dbReference type="Gene3D" id="4.10.280.10">
    <property type="entry name" value="Helix-loop-helix DNA-binding domain"/>
    <property type="match status" value="1"/>
</dbReference>
<dbReference type="InterPro" id="IPR011598">
    <property type="entry name" value="bHLH_dom"/>
</dbReference>
<dbReference type="InterPro" id="IPR050370">
    <property type="entry name" value="HES_HEY"/>
</dbReference>
<dbReference type="InterPro" id="IPR036638">
    <property type="entry name" value="HLH_DNA-bd_sf"/>
</dbReference>
<dbReference type="InterPro" id="IPR003650">
    <property type="entry name" value="Orange_dom"/>
</dbReference>
<dbReference type="PANTHER" id="PTHR10985">
    <property type="entry name" value="BASIC HELIX-LOOP-HELIX TRANSCRIPTION FACTOR, HES-RELATED"/>
    <property type="match status" value="1"/>
</dbReference>
<dbReference type="Pfam" id="PF07527">
    <property type="entry name" value="Hairy_orange"/>
    <property type="match status" value="1"/>
</dbReference>
<dbReference type="Pfam" id="PF00010">
    <property type="entry name" value="HLH"/>
    <property type="match status" value="1"/>
</dbReference>
<dbReference type="SMART" id="SM00353">
    <property type="entry name" value="HLH"/>
    <property type="match status" value="1"/>
</dbReference>
<dbReference type="SMART" id="SM00511">
    <property type="entry name" value="ORANGE"/>
    <property type="match status" value="1"/>
</dbReference>
<dbReference type="SUPFAM" id="SSF47459">
    <property type="entry name" value="HLH, helix-loop-helix DNA-binding domain"/>
    <property type="match status" value="1"/>
</dbReference>
<dbReference type="PROSITE" id="PS50888">
    <property type="entry name" value="BHLH"/>
    <property type="match status" value="1"/>
</dbReference>
<dbReference type="PROSITE" id="PS51054">
    <property type="entry name" value="ORANGE"/>
    <property type="match status" value="1"/>
</dbReference>